<keyword id="KW-0002">3D-structure</keyword>
<keyword id="KW-0025">Alternative splicing</keyword>
<keyword id="KW-1003">Cell membrane</keyword>
<keyword id="KW-0225">Disease variant</keyword>
<keyword id="KW-0967">Endosome</keyword>
<keyword id="KW-0325">Glycoprotein</keyword>
<keyword id="KW-0333">Golgi apparatus</keyword>
<keyword id="KW-0406">Ion transport</keyword>
<keyword id="KW-0408">Iron</keyword>
<keyword id="KW-0410">Iron transport</keyword>
<keyword id="KW-0458">Lysosome</keyword>
<keyword id="KW-0472">Membrane</keyword>
<keyword id="KW-0496">Mitochondrion</keyword>
<keyword id="KW-1000">Mitochondrion outer membrane</keyword>
<keyword id="KW-0597">Phosphoprotein</keyword>
<keyword id="KW-1267">Proteomics identification</keyword>
<keyword id="KW-1185">Reference proteome</keyword>
<keyword id="KW-0769">Symport</keyword>
<keyword id="KW-0812">Transmembrane</keyword>
<keyword id="KW-1133">Transmembrane helix</keyword>
<keyword id="KW-0813">Transport</keyword>
<keyword id="KW-0832">Ubl conjugation</keyword>
<accession>P49281</accession>
<accession>B3KT08</accession>
<accession>B4DK84</accession>
<accession>F5H741</accession>
<accession>O43288</accession>
<accession>O60932</accession>
<accession>O94801</accession>
<accession>Q498Z5</accession>
<accession>Q8IUD7</accession>
<accession>Q96J35</accession>
<comment type="function">
    <text evidence="1 2 11 12 14 15 16 17">Proton-coupled metal ion symporter operating with a proton to metal ion stoichiometry of 1:1 (PubMed:17109629, PubMed:17293870, PubMed:22736759, PubMed:25326704, PubMed:25491917). Selectively transports various divalent metal cations, in decreasing affinity: Cd(2+) &gt; Fe(2+) &gt; Co(2+), Mn(2+) &gt;&gt; Zn(2+), Ni(2+), VO(2+) (PubMed:17109629, PubMed:17293870, PubMed:22736759, PubMed:25326704, PubMed:25491917). Essential for maintenance of iron homeostasis by modulating intestinal absorption of dietary Fe(2+) and TF-associated endosomal Fe(2+) transport in erythroid precursors and other cells (By similarity). Enables Fe(2+) and Mn(2+) ion entry into mitochondria, and is thus expected to promote mitochondrial heme synthesis, iron-sulfur cluster biogenesis and antioxidant defense (By similarity) (PubMed:24448823). Can mediate uncoupled fluxes of either protons or metal ions.</text>
</comment>
<comment type="catalytic activity">
    <molecule>Isoform 1</molecule>
    <reaction evidence="11 12">
        <text>Fe(2+)(in) + H(+)(in) = Fe(2+)(out) + H(+)(out)</text>
        <dbReference type="Rhea" id="RHEA:29579"/>
        <dbReference type="ChEBI" id="CHEBI:15378"/>
        <dbReference type="ChEBI" id="CHEBI:29033"/>
    </reaction>
    <physiologicalReaction direction="left-to-right" evidence="1">
        <dbReference type="Rhea" id="RHEA:29580"/>
    </physiologicalReaction>
    <physiologicalReaction direction="right-to-left" evidence="29 30">
        <dbReference type="Rhea" id="RHEA:29581"/>
    </physiologicalReaction>
</comment>
<comment type="catalytic activity">
    <molecule>Isoform 2</molecule>
    <reaction evidence="11 12">
        <text>Fe(2+)(in) + H(+)(in) = Fe(2+)(out) + H(+)(out)</text>
        <dbReference type="Rhea" id="RHEA:29579"/>
        <dbReference type="ChEBI" id="CHEBI:15378"/>
        <dbReference type="ChEBI" id="CHEBI:29033"/>
    </reaction>
    <physiologicalReaction direction="left-to-right" evidence="1">
        <dbReference type="Rhea" id="RHEA:29580"/>
    </physiologicalReaction>
    <physiologicalReaction direction="right-to-left" evidence="29 30">
        <dbReference type="Rhea" id="RHEA:29581"/>
    </physiologicalReaction>
</comment>
<comment type="catalytic activity">
    <molecule>Isoform 2</molecule>
    <reaction evidence="11">
        <text>Co(2+)(out) + H(+)(out) = Co(2+)(in) + H(+)(in)</text>
        <dbReference type="Rhea" id="RHEA:73035"/>
        <dbReference type="ChEBI" id="CHEBI:15378"/>
        <dbReference type="ChEBI" id="CHEBI:48828"/>
    </reaction>
    <physiologicalReaction direction="left-to-right" evidence="29">
        <dbReference type="Rhea" id="RHEA:73036"/>
    </physiologicalReaction>
</comment>
<comment type="catalytic activity">
    <molecule>Isoform 2</molecule>
    <reaction evidence="11 16">
        <text>Cd(2+)(out) + H(+)(out) = Cd(2+)(in) + H(+)(in)</text>
        <dbReference type="Rhea" id="RHEA:73031"/>
        <dbReference type="ChEBI" id="CHEBI:15378"/>
        <dbReference type="ChEBI" id="CHEBI:48775"/>
    </reaction>
    <physiologicalReaction direction="left-to-right" evidence="29 32">
        <dbReference type="Rhea" id="RHEA:73032"/>
    </physiologicalReaction>
</comment>
<comment type="catalytic activity">
    <molecule>Isoform 2</molecule>
    <reaction evidence="11">
        <text>Mn(2+)(in) + H(+)(in) = Mn(2+)(out) + H(+)(out)</text>
        <dbReference type="Rhea" id="RHEA:29007"/>
        <dbReference type="ChEBI" id="CHEBI:15378"/>
        <dbReference type="ChEBI" id="CHEBI:29035"/>
    </reaction>
    <physiologicalReaction direction="left-to-right" evidence="1">
        <dbReference type="Rhea" id="RHEA:29008"/>
    </physiologicalReaction>
    <physiologicalReaction direction="right-to-left" evidence="29">
        <dbReference type="Rhea" id="RHEA:29009"/>
    </physiologicalReaction>
</comment>
<comment type="catalytic activity">
    <molecule>Isoform 2</molecule>
    <reaction evidence="11">
        <text>Zn(2+)(out) + H(+)(out) = Zn(2+)(in) + H(+)(in)</text>
        <dbReference type="Rhea" id="RHEA:71195"/>
        <dbReference type="ChEBI" id="CHEBI:15378"/>
        <dbReference type="ChEBI" id="CHEBI:29105"/>
    </reaction>
    <physiologicalReaction direction="left-to-right" evidence="29">
        <dbReference type="Rhea" id="RHEA:71196"/>
    </physiologicalReaction>
</comment>
<comment type="catalytic activity">
    <molecule>Isoform 2</molecule>
    <reaction evidence="11">
        <text>Ni(2+)(out) + H(+)(out) = Ni(2+)(in) + H(+)(in)</text>
        <dbReference type="Rhea" id="RHEA:73039"/>
        <dbReference type="ChEBI" id="CHEBI:15378"/>
        <dbReference type="ChEBI" id="CHEBI:49786"/>
    </reaction>
    <physiologicalReaction direction="left-to-right" evidence="29">
        <dbReference type="Rhea" id="RHEA:73040"/>
    </physiologicalReaction>
</comment>
<comment type="catalytic activity">
    <molecule>Isoform 3</molecule>
    <reaction evidence="11 12 14 17">
        <text>Fe(2+)(in) + H(+)(in) = Fe(2+)(out) + H(+)(out)</text>
        <dbReference type="Rhea" id="RHEA:29579"/>
        <dbReference type="ChEBI" id="CHEBI:15378"/>
        <dbReference type="ChEBI" id="CHEBI:29033"/>
    </reaction>
    <physiologicalReaction direction="left-to-right" evidence="1">
        <dbReference type="Rhea" id="RHEA:29580"/>
    </physiologicalReaction>
    <physiologicalReaction direction="right-to-left" evidence="29 30 31 33">
        <dbReference type="Rhea" id="RHEA:29581"/>
    </physiologicalReaction>
</comment>
<comment type="catalytic activity">
    <molecule>Isoform 3</molecule>
    <reaction evidence="11 14">
        <text>Co(2+)(out) + H(+)(out) = Co(2+)(in) + H(+)(in)</text>
        <dbReference type="Rhea" id="RHEA:73035"/>
        <dbReference type="ChEBI" id="CHEBI:15378"/>
        <dbReference type="ChEBI" id="CHEBI:48828"/>
    </reaction>
    <physiologicalReaction direction="left-to-right" evidence="29 31">
        <dbReference type="Rhea" id="RHEA:73036"/>
    </physiologicalReaction>
</comment>
<comment type="catalytic activity">
    <molecule>Isoform 3</molecule>
    <reaction evidence="11 14">
        <text>Cd(2+)(out) + H(+)(out) = Cd(2+)(in) + H(+)(in)</text>
        <dbReference type="Rhea" id="RHEA:73031"/>
        <dbReference type="ChEBI" id="CHEBI:15378"/>
        <dbReference type="ChEBI" id="CHEBI:48775"/>
    </reaction>
    <physiologicalReaction direction="left-to-right" evidence="29 31">
        <dbReference type="Rhea" id="RHEA:73032"/>
    </physiologicalReaction>
</comment>
<comment type="catalytic activity">
    <molecule>Isoform 3</molecule>
    <reaction evidence="11 12 14">
        <text>Mn(2+)(in) + H(+)(in) = Mn(2+)(out) + H(+)(out)</text>
        <dbReference type="Rhea" id="RHEA:29007"/>
        <dbReference type="ChEBI" id="CHEBI:15378"/>
        <dbReference type="ChEBI" id="CHEBI:29035"/>
    </reaction>
    <physiologicalReaction direction="left-to-right" evidence="1">
        <dbReference type="Rhea" id="RHEA:29008"/>
    </physiologicalReaction>
    <physiologicalReaction direction="right-to-left" evidence="29 30 31">
        <dbReference type="Rhea" id="RHEA:29009"/>
    </physiologicalReaction>
</comment>
<comment type="catalytic activity">
    <molecule>Isoform 3</molecule>
    <reaction evidence="11 14">
        <text>Zn(2+)(out) + H(+)(out) = Zn(2+)(in) + H(+)(in)</text>
        <dbReference type="Rhea" id="RHEA:71195"/>
        <dbReference type="ChEBI" id="CHEBI:15378"/>
        <dbReference type="ChEBI" id="CHEBI:29105"/>
    </reaction>
    <physiologicalReaction direction="left-to-right" evidence="29 31">
        <dbReference type="Rhea" id="RHEA:71196"/>
    </physiologicalReaction>
</comment>
<comment type="catalytic activity">
    <molecule>Isoform 3</molecule>
    <reaction evidence="11 14">
        <text>Ni(2+)(out) + H(+)(out) = Ni(2+)(in) + H(+)(in)</text>
        <dbReference type="Rhea" id="RHEA:73039"/>
        <dbReference type="ChEBI" id="CHEBI:15378"/>
        <dbReference type="ChEBI" id="CHEBI:49786"/>
    </reaction>
    <physiologicalReaction direction="left-to-right" evidence="29 31">
        <dbReference type="Rhea" id="RHEA:73040"/>
    </physiologicalReaction>
</comment>
<comment type="catalytic activity">
    <molecule>Isoform 3</molecule>
    <reaction evidence="11">
        <text>H(+)(in) = H(+)(out)</text>
        <dbReference type="Rhea" id="RHEA:34979"/>
        <dbReference type="ChEBI" id="CHEBI:15378"/>
    </reaction>
</comment>
<comment type="catalytic activity">
    <molecule>Isoform 3</molecule>
    <reaction evidence="11">
        <text>Fe(2+)(in) = Fe(2+)(out)</text>
        <dbReference type="Rhea" id="RHEA:28486"/>
        <dbReference type="ChEBI" id="CHEBI:29033"/>
    </reaction>
</comment>
<comment type="catalytic activity">
    <molecule>Isoform 4</molecule>
    <reaction evidence="11 12">
        <text>Fe(2+)(in) + H(+)(in) = Fe(2+)(out) + H(+)(out)</text>
        <dbReference type="Rhea" id="RHEA:29579"/>
        <dbReference type="ChEBI" id="CHEBI:15378"/>
        <dbReference type="ChEBI" id="CHEBI:29033"/>
    </reaction>
    <physiologicalReaction direction="left-to-right" evidence="1">
        <dbReference type="Rhea" id="RHEA:29580"/>
    </physiologicalReaction>
    <physiologicalReaction direction="right-to-left" evidence="29 30">
        <dbReference type="Rhea" id="RHEA:29581"/>
    </physiologicalReaction>
</comment>
<comment type="biophysicochemical properties">
    <phDependence>
        <text evidence="12">Optimum pH is 5.5-6.5 for Fe(2+) uptake.</text>
    </phDependence>
</comment>
<comment type="biophysicochemical properties">
    <molecule>Isoform 2</molecule>
    <kinetics>
        <KM evidence="11">1 uM for Fe2(+) (at pH 5.5)</KM>
        <KM evidence="11">1.6 uM for H(+) (at pH 5.5)</KM>
    </kinetics>
</comment>
<comment type="biophysicochemical properties">
    <molecule>Isoform 3</molecule>
    <kinetics>
        <KM evidence="11">1.5 uM for Fe2(+) (at pH 5.5)</KM>
        <KM evidence="11">1.3 uM for H(+) (at pH 5.5)</KM>
        <KM evidence="14">1.06 uM for Cd(2+) (at -70 mV and pH 5.5)</KM>
        <KM evidence="14">1.22 uM for Fe2(+) (at -70 mV and pH 5.5)</KM>
        <KM evidence="14">2.56 uM for Co(2+) (at -70 mV and pH 5.5)</KM>
        <KM evidence="14">4.18 uM for Mn(2+) (at -70 mV and pH 5.5)</KM>
        <KM evidence="14">10.7 uM for Ni(2+) (at -70 mV and pH 5.5)</KM>
        <KM evidence="14">16.9 uM for VO(2+) (at -70 mV and pH 5.5)</KM>
        <KM evidence="14">19.1 uM for Zn(2+) (at -70 mV and pH 5.5)</KM>
    </kinetics>
</comment>
<comment type="subunit">
    <text evidence="2 13 15 18">Forms a complex with NDFIP1 and NEDD4L, in cortical neurons, in response to iron and cobalt exposure; this interaction leads to SLC11A2 ubiquitination by NEDD4L and proteasome-dependent degradation (PubMed:19706893). Interacts with NDFIP1, NDFIP2 and WWP2; this interaction leads to SLC11A2 ubiquitination by WWP2 and subsequent proteasome-dependent degradation (By similarity). Interacts with COX2 and TOM6 at the outer mitochondrion membrane (PubMed:24448823). Interacts with ARRDC1; this interaction regulates the incorporation of SLC11A2 into extracellular vesicles through an ubiquitination-dependent mechanism (PubMed:27462458). Interacts with ARRDC4; controls the incorporation of SLC11A2 into extracellular vesicles through an ubiquitination-dependent mechanism (PubMed:27462458).</text>
</comment>
<comment type="interaction">
    <interactant intactId="EBI-4319335">
        <id>P49281</id>
    </interactant>
    <interactant intactId="EBI-11732799">
        <id>Q9BT67</id>
        <label>NDFIP1</label>
    </interactant>
    <organismsDiffer>false</organismsDiffer>
    <experiments>2</experiments>
</comment>
<comment type="interaction">
    <interactant intactId="EBI-4319335">
        <id>P49281</id>
    </interactant>
    <interactant intactId="EBI-717962">
        <id>Q96PU5</id>
        <label>NEDD4L</label>
    </interactant>
    <organismsDiffer>false</organismsDiffer>
    <experiments>2</experiments>
</comment>
<comment type="interaction">
    <interactant intactId="EBI-10828817">
        <id>P49281-3</id>
    </interactant>
    <interactant intactId="EBI-2105756">
        <id>P00403</id>
        <label>MT-CO2</label>
    </interactant>
    <organismsDiffer>false</organismsDiffer>
    <experiments>2</experiments>
</comment>
<comment type="subcellular location">
    <molecule>Isoform 1</molecule>
    <subcellularLocation>
        <location evidence="6">Early endosome membrane</location>
        <topology evidence="3">Multi-pass membrane protein</topology>
    </subcellularLocation>
    <subcellularLocation>
        <location evidence="6">Apical cell membrane</location>
        <topology evidence="3">Multi-pass membrane protein</topology>
    </subcellularLocation>
    <text evidence="6">Predominantly localizes in early endosomes that underlie the apical membrane of polarized epithelia.</text>
</comment>
<comment type="subcellular location">
    <molecule>Isoform 2</molecule>
    <subcellularLocation>
        <location evidence="6">Late endosome membrane</location>
        <topology evidence="3">Multi-pass membrane protein</topology>
    </subcellularLocation>
    <subcellularLocation>
        <location evidence="6">Lysosome membrane</location>
        <topology evidence="3">Multi-pass membrane protein</topology>
    </subcellularLocation>
    <subcellularLocation>
        <location evidence="6">Apical cell membrane</location>
        <topology evidence="3">Multi-pass membrane protein</topology>
    </subcellularLocation>
    <subcellularLocation>
        <location evidence="18">Cell membrane</location>
        <topology evidence="3">Multi-pass membrane protein</topology>
    </subcellularLocation>
    <subcellularLocation>
        <location evidence="18">Extracellular vesicle membrane</location>
        <topology>Multi-pass membrane protein</topology>
    </subcellularLocation>
</comment>
<comment type="subcellular location">
    <molecule>Isoform 3</molecule>
    <subcellularLocation>
        <location evidence="17">Cell membrane</location>
    </subcellularLocation>
</comment>
<comment type="subcellular location">
    <subcellularLocation>
        <location evidence="15">Mitochondrion outer membrane</location>
        <topology evidence="3">Multi-pass membrane protein</topology>
    </subcellularLocation>
    <subcellularLocation>
        <location evidence="2">Golgi apparatus</location>
        <location evidence="2">trans-Golgi network membrane</location>
        <topology evidence="3">Multi-pass membrane protein</topology>
    </subcellularLocation>
    <subcellularLocation>
        <location evidence="2">Recycling endosome membrane</location>
        <topology evidence="3">Multi-pass membrane protein</topology>
    </subcellularLocation>
</comment>
<comment type="alternative products">
    <event type="alternative splicing"/>
    <isoform>
        <id>P49281-1</id>
        <name>2</name>
        <name evidence="21">1B-Non-IRE</name>
        <name evidence="22">DMT1B</name>
        <sequence type="displayed"/>
    </isoform>
    <isoform>
        <id>P49281-2</id>
        <name>1</name>
        <name evidence="21">IB-IRE</name>
        <name evidence="22">DMT1A</name>
        <sequence type="described" ref="VSP_003595"/>
    </isoform>
    <isoform>
        <id>P49281-3</id>
        <name>3</name>
        <name evidence="21">1A-IRE</name>
        <sequence type="described" ref="VSP_038144 VSP_003595"/>
    </isoform>
    <isoform>
        <id>P49281-4</id>
        <name>4</name>
        <name evidence="21">1A-Non-IRE</name>
        <sequence type="described" ref="VSP_038144"/>
    </isoform>
    <isoform>
        <id>P49281-5</id>
        <name>5</name>
        <sequence type="described" ref="VSP_046058 VSP_003595"/>
    </isoform>
</comment>
<comment type="tissue specificity">
    <text evidence="19 20">Ubiquitously expressed. Expressed in erythroid progenitors.</text>
</comment>
<comment type="induction">
    <molecule>Isoform 2</molecule>
    <text evidence="5">Up-regulated under iron-depletion conditions. Down-regulated in response to high extracellular iron levels.</text>
</comment>
<comment type="induction">
    <molecule>Isoform 3</molecule>
    <text evidence="5">Up-regulated under iron-depletion conditions. Down-regulated in response to high extracellular iron levels.</text>
</comment>
<comment type="induction">
    <molecule>Isoform 4</molecule>
    <text evidence="5">Up-regulated under iron-depletion conditions. Down-regulated in response to high extracellular iron levels.</text>
</comment>
<comment type="PTM">
    <text evidence="2">Ubiquitinated by WWP2.</text>
</comment>
<comment type="PTM">
    <text evidence="6">N-glycosylated.</text>
</comment>
<comment type="disease" evidence="7 8 9">
    <disease id="DI-01787">
        <name>Anemia, hypochromic microcytic, with iron overload 1</name>
        <acronym>AHMIO1</acronym>
        <description>A hematologic disease characterized by abnormal hemoglobin content in the erythrocytes which are reduced in size. The disorder is due to an error of iron metabolism that results in high serum iron, massive hepatic iron deposition, and absence of sideroblasts and stainable bone marrow iron store. Despite adequate transferrin-iron complex, delivery of iron to the erythroid bone marrow is apparently insufficient for the demands of hemoglobin synthesis.</description>
        <dbReference type="MIM" id="206100"/>
    </disease>
    <text>The disease is caused by variants affecting the gene represented in this entry.</text>
</comment>
<comment type="miscellaneous">
    <text>NRAMP2-mediated iron uptake is markedly stimulated by nifedipine in a concentration-dependent manner.</text>
</comment>
<comment type="similarity">
    <text evidence="28">Belongs to the NRAMP family.</text>
</comment>
<comment type="caution">
    <text evidence="1 14">The capacity to transport copper ions remains controversial.</text>
</comment>
<comment type="sequence caution" evidence="28">
    <conflict type="erroneous initiation">
        <sequence resource="EMBL-CDS" id="AAH02592"/>
    </conflict>
</comment>
<comment type="sequence caution" evidence="28">
    <conflict type="erroneous gene model prediction">
        <sequence resource="EMBL-CDS" id="BAA34374"/>
    </conflict>
</comment>
<gene>
    <name type="primary">SLC11A2</name>
    <name type="synonym">DCT1</name>
    <name type="synonym">DMT1</name>
    <name type="synonym">NRAMP2</name>
    <name type="ORF">OK/SW-cl.20</name>
</gene>
<sequence length="568" mass="62266">MVLGPEQKMSDDSVSGDHGESASLGNINPAYSNPSLSQSPGDSEEYFATYFNEKISIPEEEYSCFSFRKLWAFTGPGFLMSIAYLDPGNIESDLQSGAVAGFKLLWILLLATLVGLLLQRLAARLGVVTGLHLAEVCHRQYPKVPRVILWLMVELAIIGSDMQEVIGSAIAINLLSVGRIPLWGGVLITIADTFVFLFLDKYGLRKLEAFFGFLITIMALTFGYEYVTVKPSQSQVLKGMFVPSCSGCRTPQIEQAVGIVGAVIMPHNMYLHSALVKSRQVNRNNKQEVREANKYFFIESCIALFVSFIINVFVVSVFAEAFFGKTNEQVVEVCTNTSSPHAGLFPKDNSTLAVDIYKGGVVLGCYFGPAALYIWAVGILAAGQSSTMTGTYSGQFVMEGFLNLKWSRFARVVLTRSIAIIPTLLVAVFQDVEHLTGMNDFLNVLQSLQLPFALIPILTFTSLRPVMSDFANGLGWRIAGGILVLIICSINMYFVVVYVRDLGHVALYVVAAVVSVAYLGFVFYLGWQCLIALGMSFLDCGHTCHLGLTAQPELYLLNTMDADSLVSR</sequence>
<protein>
    <recommendedName>
        <fullName>Natural resistance-associated macrophage protein 2</fullName>
        <shortName>NRAMP 2</shortName>
    </recommendedName>
    <alternativeName>
        <fullName>Divalent cation transporter 1</fullName>
    </alternativeName>
    <alternativeName>
        <fullName>Divalent metal transporter 1</fullName>
        <shortName>DMT-1</shortName>
    </alternativeName>
    <alternativeName>
        <fullName>Solute carrier family 11 member 2</fullName>
    </alternativeName>
</protein>
<reference key="1">
    <citation type="journal article" date="1997" name="Mol. Immunol.">
        <title>Complete nucleotide sequence of human NRAMP2 cDNA.</title>
        <authorList>
            <person name="Kishi F."/>
            <person name="Tabuchi M."/>
        </authorList>
    </citation>
    <scope>NUCLEOTIDE SEQUENCE [MRNA] (ISOFORM 1)</scope>
    <source>
        <tissue>Brain</tissue>
    </source>
</reference>
<reference key="2">
    <citation type="journal article" date="1998" name="Biochem. Biophys. Res. Commun.">
        <title>Human natural resistance-associated macrophage protein 2: gene cloning and protein identification.</title>
        <authorList>
            <person name="Kishi F."/>
            <person name="Tabuchi M."/>
        </authorList>
    </citation>
    <scope>NUCLEOTIDE SEQUENCE [GENOMIC DNA]</scope>
    <source>
        <tissue>Placenta</tissue>
    </source>
</reference>
<reference key="3">
    <citation type="journal article" date="1998" name="Blood Cells Mol. Dis.">
        <title>The human Nramp2 gene: characterization of the gene structure, alternative splicing, promoter region and polymorphisms.</title>
        <authorList>
            <person name="Lee P.L."/>
            <person name="Gelbart T."/>
            <person name="West C."/>
            <person name="Halloran C."/>
            <person name="Beutler E."/>
        </authorList>
    </citation>
    <scope>NUCLEOTIDE SEQUENCE [GENOMIC DNA / MRNA] (ISOFORMS 1 AND 2)</scope>
    <scope>TISSUE SPECIFICITY</scope>
    <scope>VARIANT ILE-435</scope>
</reference>
<reference key="4">
    <citation type="journal article" date="2002" name="Proc. Natl. Acad. Sci. U.S.A.">
        <title>Previously uncharacterized isoforms of divalent metal transporter (DMT)-1: implications for regulation and cellular function.</title>
        <authorList>
            <person name="Hubert N."/>
            <person name="Hentze M.W."/>
        </authorList>
    </citation>
    <scope>NUCLEOTIDE SEQUENCE [MRNA] (ISOFORM 1)</scope>
    <scope>NUCLEOTIDE SEQUENCE [MRNA] OF 1-583 (ISOFORM 3)</scope>
    <scope>ALTERNATIVE SPLICING (ISOFORMS 2 AND 4)</scope>
    <scope>INDUCTION (ISOFORMS 2; 3 AND 4)</scope>
</reference>
<reference key="5">
    <citation type="submission" date="1998-02" db="EMBL/GenBank/DDBJ databases">
        <title>Cloning and functional expression of the full length human NRAMP2 iron transporter.</title>
        <authorList>
            <person name="Worthington M.T."/>
            <person name="Battle E."/>
            <person name="Luo R.Q."/>
        </authorList>
    </citation>
    <scope>NUCLEOTIDE SEQUENCE (ISOFORM 1)</scope>
</reference>
<reference key="6">
    <citation type="journal article" date="2004" name="Nat. Genet.">
        <title>Complete sequencing and characterization of 21,243 full-length human cDNAs.</title>
        <authorList>
            <person name="Ota T."/>
            <person name="Suzuki Y."/>
            <person name="Nishikawa T."/>
            <person name="Otsuki T."/>
            <person name="Sugiyama T."/>
            <person name="Irie R."/>
            <person name="Wakamatsu A."/>
            <person name="Hayashi K."/>
            <person name="Sato H."/>
            <person name="Nagai K."/>
            <person name="Kimura K."/>
            <person name="Makita H."/>
            <person name="Sekine M."/>
            <person name="Obayashi M."/>
            <person name="Nishi T."/>
            <person name="Shibahara T."/>
            <person name="Tanaka T."/>
            <person name="Ishii S."/>
            <person name="Yamamoto J."/>
            <person name="Saito K."/>
            <person name="Kawai Y."/>
            <person name="Isono Y."/>
            <person name="Nakamura Y."/>
            <person name="Nagahari K."/>
            <person name="Murakami K."/>
            <person name="Yasuda T."/>
            <person name="Iwayanagi T."/>
            <person name="Wagatsuma M."/>
            <person name="Shiratori A."/>
            <person name="Sudo H."/>
            <person name="Hosoiri T."/>
            <person name="Kaku Y."/>
            <person name="Kodaira H."/>
            <person name="Kondo H."/>
            <person name="Sugawara M."/>
            <person name="Takahashi M."/>
            <person name="Kanda K."/>
            <person name="Yokoi T."/>
            <person name="Furuya T."/>
            <person name="Kikkawa E."/>
            <person name="Omura Y."/>
            <person name="Abe K."/>
            <person name="Kamihara K."/>
            <person name="Katsuta N."/>
            <person name="Sato K."/>
            <person name="Tanikawa M."/>
            <person name="Yamazaki M."/>
            <person name="Ninomiya K."/>
            <person name="Ishibashi T."/>
            <person name="Yamashita H."/>
            <person name="Murakawa K."/>
            <person name="Fujimori K."/>
            <person name="Tanai H."/>
            <person name="Kimata M."/>
            <person name="Watanabe M."/>
            <person name="Hiraoka S."/>
            <person name="Chiba Y."/>
            <person name="Ishida S."/>
            <person name="Ono Y."/>
            <person name="Takiguchi S."/>
            <person name="Watanabe S."/>
            <person name="Yosida M."/>
            <person name="Hotuta T."/>
            <person name="Kusano J."/>
            <person name="Kanehori K."/>
            <person name="Takahashi-Fujii A."/>
            <person name="Hara H."/>
            <person name="Tanase T.-O."/>
            <person name="Nomura Y."/>
            <person name="Togiya S."/>
            <person name="Komai F."/>
            <person name="Hara R."/>
            <person name="Takeuchi K."/>
            <person name="Arita M."/>
            <person name="Imose N."/>
            <person name="Musashino K."/>
            <person name="Yuuki H."/>
            <person name="Oshima A."/>
            <person name="Sasaki N."/>
            <person name="Aotsuka S."/>
            <person name="Yoshikawa Y."/>
            <person name="Matsunawa H."/>
            <person name="Ichihara T."/>
            <person name="Shiohata N."/>
            <person name="Sano S."/>
            <person name="Moriya S."/>
            <person name="Momiyama H."/>
            <person name="Satoh N."/>
            <person name="Takami S."/>
            <person name="Terashima Y."/>
            <person name="Suzuki O."/>
            <person name="Nakagawa S."/>
            <person name="Senoh A."/>
            <person name="Mizoguchi H."/>
            <person name="Goto Y."/>
            <person name="Shimizu F."/>
            <person name="Wakebe H."/>
            <person name="Hishigaki H."/>
            <person name="Watanabe T."/>
            <person name="Sugiyama A."/>
            <person name="Takemoto M."/>
            <person name="Kawakami B."/>
            <person name="Yamazaki M."/>
            <person name="Watanabe K."/>
            <person name="Kumagai A."/>
            <person name="Itakura S."/>
            <person name="Fukuzumi Y."/>
            <person name="Fujimori Y."/>
            <person name="Komiyama M."/>
            <person name="Tashiro H."/>
            <person name="Tanigami A."/>
            <person name="Fujiwara T."/>
            <person name="Ono T."/>
            <person name="Yamada K."/>
            <person name="Fujii Y."/>
            <person name="Ozaki K."/>
            <person name="Hirao M."/>
            <person name="Ohmori Y."/>
            <person name="Kawabata A."/>
            <person name="Hikiji T."/>
            <person name="Kobatake N."/>
            <person name="Inagaki H."/>
            <person name="Ikema Y."/>
            <person name="Okamoto S."/>
            <person name="Okitani R."/>
            <person name="Kawakami T."/>
            <person name="Noguchi S."/>
            <person name="Itoh T."/>
            <person name="Shigeta K."/>
            <person name="Senba T."/>
            <person name="Matsumura K."/>
            <person name="Nakajima Y."/>
            <person name="Mizuno T."/>
            <person name="Morinaga M."/>
            <person name="Sasaki M."/>
            <person name="Togashi T."/>
            <person name="Oyama M."/>
            <person name="Hata H."/>
            <person name="Watanabe M."/>
            <person name="Komatsu T."/>
            <person name="Mizushima-Sugano J."/>
            <person name="Satoh T."/>
            <person name="Shirai Y."/>
            <person name="Takahashi Y."/>
            <person name="Nakagawa K."/>
            <person name="Okumura K."/>
            <person name="Nagase T."/>
            <person name="Nomura N."/>
            <person name="Kikuchi H."/>
            <person name="Masuho Y."/>
            <person name="Yamashita R."/>
            <person name="Nakai K."/>
            <person name="Yada T."/>
            <person name="Nakamura Y."/>
            <person name="Ohara O."/>
            <person name="Isogai T."/>
            <person name="Sugano S."/>
        </authorList>
    </citation>
    <scope>NUCLEOTIDE SEQUENCE [LARGE SCALE MRNA] (ISOFORMS 1 AND 5)</scope>
    <source>
        <tissue>Brain</tissue>
        <tissue>Thalamus</tissue>
        <tissue>Trachea</tissue>
    </source>
</reference>
<reference key="7">
    <citation type="submission" date="2001-05" db="EMBL/GenBank/DDBJ databases">
        <title>Identification of immuno-peptidmics that are recognized by tumor-reactive CTL generated from TIL of colon cancer patients.</title>
        <authorList>
            <person name="Shichijo S."/>
            <person name="Itoh K."/>
        </authorList>
    </citation>
    <scope>NUCLEOTIDE SEQUENCE [LARGE SCALE MRNA] (ISOFORM 2)</scope>
    <source>
        <tissue>Colon adenocarcinoma</tissue>
    </source>
</reference>
<reference key="8">
    <citation type="journal article" date="2006" name="Nature">
        <title>The finished DNA sequence of human chromosome 12.</title>
        <authorList>
            <person name="Scherer S.E."/>
            <person name="Muzny D.M."/>
            <person name="Buhay C.J."/>
            <person name="Chen R."/>
            <person name="Cree A."/>
            <person name="Ding Y."/>
            <person name="Dugan-Rocha S."/>
            <person name="Gill R."/>
            <person name="Gunaratne P."/>
            <person name="Harris R.A."/>
            <person name="Hawes A.C."/>
            <person name="Hernandez J."/>
            <person name="Hodgson A.V."/>
            <person name="Hume J."/>
            <person name="Jackson A."/>
            <person name="Khan Z.M."/>
            <person name="Kovar-Smith C."/>
            <person name="Lewis L.R."/>
            <person name="Lozado R.J."/>
            <person name="Metzker M.L."/>
            <person name="Milosavljevic A."/>
            <person name="Miner G.R."/>
            <person name="Montgomery K.T."/>
            <person name="Morgan M.B."/>
            <person name="Nazareth L.V."/>
            <person name="Scott G."/>
            <person name="Sodergren E."/>
            <person name="Song X.-Z."/>
            <person name="Steffen D."/>
            <person name="Lovering R.C."/>
            <person name="Wheeler D.A."/>
            <person name="Worley K.C."/>
            <person name="Yuan Y."/>
            <person name="Zhang Z."/>
            <person name="Adams C.Q."/>
            <person name="Ansari-Lari M.A."/>
            <person name="Ayele M."/>
            <person name="Brown M.J."/>
            <person name="Chen G."/>
            <person name="Chen Z."/>
            <person name="Clerc-Blankenburg K.P."/>
            <person name="Davis C."/>
            <person name="Delgado O."/>
            <person name="Dinh H.H."/>
            <person name="Draper H."/>
            <person name="Gonzalez-Garay M.L."/>
            <person name="Havlak P."/>
            <person name="Jackson L.R."/>
            <person name="Jacob L.S."/>
            <person name="Kelly S.H."/>
            <person name="Li L."/>
            <person name="Li Z."/>
            <person name="Liu J."/>
            <person name="Liu W."/>
            <person name="Lu J."/>
            <person name="Maheshwari M."/>
            <person name="Nguyen B.-V."/>
            <person name="Okwuonu G.O."/>
            <person name="Pasternak S."/>
            <person name="Perez L.M."/>
            <person name="Plopper F.J.H."/>
            <person name="Santibanez J."/>
            <person name="Shen H."/>
            <person name="Tabor P.E."/>
            <person name="Verduzco D."/>
            <person name="Waldron L."/>
            <person name="Wang Q."/>
            <person name="Williams G.A."/>
            <person name="Zhang J."/>
            <person name="Zhou J."/>
            <person name="Allen C.C."/>
            <person name="Amin A.G."/>
            <person name="Anyalebechi V."/>
            <person name="Bailey M."/>
            <person name="Barbaria J.A."/>
            <person name="Bimage K.E."/>
            <person name="Bryant N.P."/>
            <person name="Burch P.E."/>
            <person name="Burkett C.E."/>
            <person name="Burrell K.L."/>
            <person name="Calderon E."/>
            <person name="Cardenas V."/>
            <person name="Carter K."/>
            <person name="Casias K."/>
            <person name="Cavazos I."/>
            <person name="Cavazos S.R."/>
            <person name="Ceasar H."/>
            <person name="Chacko J."/>
            <person name="Chan S.N."/>
            <person name="Chavez D."/>
            <person name="Christopoulos C."/>
            <person name="Chu J."/>
            <person name="Cockrell R."/>
            <person name="Cox C.D."/>
            <person name="Dang M."/>
            <person name="Dathorne S.R."/>
            <person name="David R."/>
            <person name="Davis C.M."/>
            <person name="Davy-Carroll L."/>
            <person name="Deshazo D.R."/>
            <person name="Donlin J.E."/>
            <person name="D'Souza L."/>
            <person name="Eaves K.A."/>
            <person name="Egan A."/>
            <person name="Emery-Cohen A.J."/>
            <person name="Escotto M."/>
            <person name="Flagg N."/>
            <person name="Forbes L.D."/>
            <person name="Gabisi A.M."/>
            <person name="Garza M."/>
            <person name="Hamilton C."/>
            <person name="Henderson N."/>
            <person name="Hernandez O."/>
            <person name="Hines S."/>
            <person name="Hogues M.E."/>
            <person name="Huang M."/>
            <person name="Idlebird D.G."/>
            <person name="Johnson R."/>
            <person name="Jolivet A."/>
            <person name="Jones S."/>
            <person name="Kagan R."/>
            <person name="King L.M."/>
            <person name="Leal B."/>
            <person name="Lebow H."/>
            <person name="Lee S."/>
            <person name="LeVan J.M."/>
            <person name="Lewis L.C."/>
            <person name="London P."/>
            <person name="Lorensuhewa L.M."/>
            <person name="Loulseged H."/>
            <person name="Lovett D.A."/>
            <person name="Lucier A."/>
            <person name="Lucier R.L."/>
            <person name="Ma J."/>
            <person name="Madu R.C."/>
            <person name="Mapua P."/>
            <person name="Martindale A.D."/>
            <person name="Martinez E."/>
            <person name="Massey E."/>
            <person name="Mawhiney S."/>
            <person name="Meador M.G."/>
            <person name="Mendez S."/>
            <person name="Mercado C."/>
            <person name="Mercado I.C."/>
            <person name="Merritt C.E."/>
            <person name="Miner Z.L."/>
            <person name="Minja E."/>
            <person name="Mitchell T."/>
            <person name="Mohabbat F."/>
            <person name="Mohabbat K."/>
            <person name="Montgomery B."/>
            <person name="Moore N."/>
            <person name="Morris S."/>
            <person name="Munidasa M."/>
            <person name="Ngo R.N."/>
            <person name="Nguyen N.B."/>
            <person name="Nickerson E."/>
            <person name="Nwaokelemeh O.O."/>
            <person name="Nwokenkwo S."/>
            <person name="Obregon M."/>
            <person name="Oguh M."/>
            <person name="Oragunye N."/>
            <person name="Oviedo R.J."/>
            <person name="Parish B.J."/>
            <person name="Parker D.N."/>
            <person name="Parrish J."/>
            <person name="Parks K.L."/>
            <person name="Paul H.A."/>
            <person name="Payton B.A."/>
            <person name="Perez A."/>
            <person name="Perrin W."/>
            <person name="Pickens A."/>
            <person name="Primus E.L."/>
            <person name="Pu L.-L."/>
            <person name="Puazo M."/>
            <person name="Quiles M.M."/>
            <person name="Quiroz J.B."/>
            <person name="Rabata D."/>
            <person name="Reeves K."/>
            <person name="Ruiz S.J."/>
            <person name="Shao H."/>
            <person name="Sisson I."/>
            <person name="Sonaike T."/>
            <person name="Sorelle R.P."/>
            <person name="Sutton A.E."/>
            <person name="Svatek A.F."/>
            <person name="Svetz L.A."/>
            <person name="Tamerisa K.S."/>
            <person name="Taylor T.R."/>
            <person name="Teague B."/>
            <person name="Thomas N."/>
            <person name="Thorn R.D."/>
            <person name="Trejos Z.Y."/>
            <person name="Trevino B.K."/>
            <person name="Ukegbu O.N."/>
            <person name="Urban J.B."/>
            <person name="Vasquez L.I."/>
            <person name="Vera V.A."/>
            <person name="Villasana D.M."/>
            <person name="Wang L."/>
            <person name="Ward-Moore S."/>
            <person name="Warren J.T."/>
            <person name="Wei X."/>
            <person name="White F."/>
            <person name="Williamson A.L."/>
            <person name="Wleczyk R."/>
            <person name="Wooden H.S."/>
            <person name="Wooden S.H."/>
            <person name="Yen J."/>
            <person name="Yoon L."/>
            <person name="Yoon V."/>
            <person name="Zorrilla S.E."/>
            <person name="Nelson D."/>
            <person name="Kucherlapati R."/>
            <person name="Weinstock G."/>
            <person name="Gibbs R.A."/>
        </authorList>
    </citation>
    <scope>NUCLEOTIDE SEQUENCE [LARGE SCALE GENOMIC DNA]</scope>
</reference>
<reference key="9">
    <citation type="submission" date="2005-07" db="EMBL/GenBank/DDBJ databases">
        <authorList>
            <person name="Mural R.J."/>
            <person name="Istrail S."/>
            <person name="Sutton G.G."/>
            <person name="Florea L."/>
            <person name="Halpern A.L."/>
            <person name="Mobarry C.M."/>
            <person name="Lippert R."/>
            <person name="Walenz B."/>
            <person name="Shatkay H."/>
            <person name="Dew I."/>
            <person name="Miller J.R."/>
            <person name="Flanigan M.J."/>
            <person name="Edwards N.J."/>
            <person name="Bolanos R."/>
            <person name="Fasulo D."/>
            <person name="Halldorsson B.V."/>
            <person name="Hannenhalli S."/>
            <person name="Turner R."/>
            <person name="Yooseph S."/>
            <person name="Lu F."/>
            <person name="Nusskern D.R."/>
            <person name="Shue B.C."/>
            <person name="Zheng X.H."/>
            <person name="Zhong F."/>
            <person name="Delcher A.L."/>
            <person name="Huson D.H."/>
            <person name="Kravitz S.A."/>
            <person name="Mouchard L."/>
            <person name="Reinert K."/>
            <person name="Remington K.A."/>
            <person name="Clark A.G."/>
            <person name="Waterman M.S."/>
            <person name="Eichler E.E."/>
            <person name="Adams M.D."/>
            <person name="Hunkapiller M.W."/>
            <person name="Myers E.W."/>
            <person name="Venter J.C."/>
        </authorList>
    </citation>
    <scope>NUCLEOTIDE SEQUENCE [LARGE SCALE GENOMIC DNA]</scope>
</reference>
<reference key="10">
    <citation type="journal article" date="2004" name="Genome Res.">
        <title>The status, quality, and expansion of the NIH full-length cDNA project: the Mammalian Gene Collection (MGC).</title>
        <authorList>
            <consortium name="The MGC Project Team"/>
        </authorList>
    </citation>
    <scope>NUCLEOTIDE SEQUENCE [LARGE SCALE MRNA] (ISOFORMS 1 AND 3)</scope>
    <source>
        <tissue>Hypothalamus</tissue>
        <tissue>Neuroblastoma</tissue>
    </source>
</reference>
<reference key="11">
    <citation type="journal article" date="1995" name="Mamm. Genome">
        <title>Cloning and characterization of a second human NRAMP gene on chromosome 12q13.</title>
        <authorList>
            <person name="Vidal S."/>
            <person name="Belouchi A.-M."/>
            <person name="Cellier M."/>
            <person name="Beatty B."/>
            <person name="Gros P."/>
        </authorList>
    </citation>
    <scope>NUCLEOTIDE SEQUENCE [MRNA] (ISOFORM 2)</scope>
    <source>
        <tissue>Liver</tissue>
    </source>
</reference>
<reference key="12">
    <citation type="journal article" date="2002" name="Mol. Biol. Cell">
        <title>Alternative splicing regulates the subcellular localization of divalent metal transporter 1 isoforms.</title>
        <authorList>
            <person name="Tabuchi M."/>
            <person name="Tanaka N."/>
            <person name="Nishida-Kitayama J."/>
            <person name="Ohno H."/>
            <person name="Kishi F."/>
        </authorList>
    </citation>
    <scope>SUBCELLULAR LOCATION (ISOFORMS 1 AND 2)</scope>
    <scope>ALTERNATIVE SPLICING</scope>
    <scope>MUTAGENESIS OF SER-338; THR-351; TYR-555 AND LEU-557</scope>
    <scope>REGION</scope>
    <scope>GLYCOSYLATION</scope>
</reference>
<reference key="13">
    <citation type="journal article" date="2007" name="Biochem. J.">
        <title>Functional properties of multiple isoforms of human divalent metal-ion transporter 1 (DMT1).</title>
        <authorList>
            <person name="Mackenzie B."/>
            <person name="Takanaga H."/>
            <person name="Hubert N."/>
            <person name="Rolfs A."/>
            <person name="Hediger M.A."/>
        </authorList>
    </citation>
    <scope>FUNCTION</scope>
    <scope>TRANSPORT ACTIVITY (ISOFORMS 1; 2; 3 AND 4)</scope>
    <scope>BIOPHYSICOCHEMICAL PROPERTIES (ISOFORMS 2 AND 3)</scope>
</reference>
<reference key="14">
    <citation type="journal article" date="2007" name="Nat. Med.">
        <title>Ca2+ channel blockers reverse iron overload by a new mechanism via divalent metal transporter-1.</title>
        <authorList>
            <person name="Ludwiczek S."/>
            <person name="Theurl I."/>
            <person name="Muckenthaler M.U."/>
            <person name="Jakab M."/>
            <person name="Mair S.M."/>
            <person name="Theurl M."/>
            <person name="Kiss J."/>
            <person name="Paulmichl M."/>
            <person name="Hentze M.W."/>
            <person name="Ritter M."/>
            <person name="Weiss G."/>
        </authorList>
    </citation>
    <scope>FUNCTION</scope>
    <scope>TRANSPORT ACTIVITY (ISOFORMS 1; 2; 3 AND 4)</scope>
    <scope>BIOPHYSICOCHEMICAL PROPERTIES</scope>
    <scope>NIFEDIPINE TREATMENT</scope>
</reference>
<reference key="15">
    <citation type="journal article" date="2009" name="Proc. Natl. Acad. Sci. U.S.A.">
        <title>Divalent metal transporter 1 (DMT1) regulation by Ndfip1 prevents metal toxicity in human neurons.</title>
        <authorList>
            <person name="Howitt J."/>
            <person name="Putz U."/>
            <person name="Lackovic J."/>
            <person name="Doan A."/>
            <person name="Dorstyn L."/>
            <person name="Cheng H."/>
            <person name="Yang B."/>
            <person name="Chan-Ling T."/>
            <person name="Silke J."/>
            <person name="Kumar S."/>
            <person name="Tan S.S."/>
        </authorList>
    </citation>
    <scope>INTERACTION WITH NDFIP1 AND NEDD4L</scope>
</reference>
<reference key="16">
    <citation type="journal article" date="2012" name="J. Biol. Chem.">
        <title>Substrate profile and metal-ion selectivity of human divalent metal-ion transporter-1.</title>
        <authorList>
            <person name="Illing A.C."/>
            <person name="Shawki A."/>
            <person name="Cunningham C.L."/>
            <person name="Mackenzie B."/>
        </authorList>
    </citation>
    <scope>FUNCTION</scope>
    <scope>TRANSPORT ACTIVITY (ISOFORM 3)</scope>
    <scope>BIOPHYSICOCHEMICAL PROPERTIES (ISOFORM 3)</scope>
    <scope>CAUTION</scope>
</reference>
<reference key="17">
    <citation type="journal article" date="2015" name="Cell Biol. Int.">
        <title>Inhibition of iron uptake by ferristatin II is exerted through internalization of DMT1 at the plasma membrane.</title>
        <authorList>
            <person name="Yanatori I."/>
            <person name="Yasui Y."/>
            <person name="Noguchi Y."/>
            <person name="Kishi F."/>
        </authorList>
    </citation>
    <scope>FUNCTION</scope>
    <scope>TRANSPORT ACTIVITY (ISOFORM 3)</scope>
    <scope>SUBCELLULAR LOCATION (ISOFORM 3)</scope>
</reference>
<reference key="18">
    <citation type="journal article" date="2014" name="FASEB J.">
        <title>Evidence for mitochondrial localization of divalent metal transporter 1 (DMT1).</title>
        <authorList>
            <person name="Wolff N.A."/>
            <person name="Ghio A.J."/>
            <person name="Garrick L.M."/>
            <person name="Garrick M.D."/>
            <person name="Zhao L."/>
            <person name="Fenton R.A."/>
            <person name="Thevenod F."/>
        </authorList>
    </citation>
    <scope>SUBCELLULAR LOCATION</scope>
    <scope>FUNCTION</scope>
    <scope>INTERACTION WITH COX2 AND TOM6</scope>
</reference>
<reference key="19">
    <citation type="journal article" date="2014" name="Nat. Struct. Mol. Biol.">
        <title>Crystal structure of a SLC11 (NRAMP) transporter reveals the basis for transition-metal ion transport.</title>
        <authorList>
            <person name="Ehrnstorfer I.A."/>
            <person name="Geertsma E.R."/>
            <person name="Pardon E."/>
            <person name="Steyaert J."/>
            <person name="Dutzler R."/>
        </authorList>
    </citation>
    <scope>FUNCTION</scope>
    <scope>TRANSPORT ACTIVITY (ISOFORM 2)</scope>
    <scope>MUTAGENESIS OF ASP-86; ASN-89 AND MET-265</scope>
</reference>
<reference key="20">
    <citation type="journal article" date="2016" name="Cell Discov.">
        <title>Regulation of the divalent metal ion transporter via membrane budding.</title>
        <authorList>
            <person name="Mackenzie K."/>
            <person name="Foot N.J."/>
            <person name="Anand S."/>
            <person name="Dalton H.E."/>
            <person name="Chaudhary N."/>
            <person name="Collins B.M."/>
            <person name="Mathivanan S."/>
            <person name="Kumar S."/>
        </authorList>
    </citation>
    <scope>INTERACTION WITH ARRDC1 AND ARRDC4</scope>
    <scope>SUBCELLULAR LOCATION (ISOFORM 2)</scope>
</reference>
<reference key="21">
    <citation type="journal article" date="2018" name="Sci. Rep.">
        <title>A role for divalent metal transporter (DMT1) in mitochondrial uptake of iron and manganese.</title>
        <authorList>
            <person name="Wolff N.A."/>
            <person name="Garrick M.D."/>
            <person name="Zhao L."/>
            <person name="Garrick L.M."/>
            <person name="Ghio A.J."/>
            <person name="Thevenod F."/>
        </authorList>
    </citation>
    <scope>TISSUE SPECIFICITY</scope>
</reference>
<reference key="22">
    <citation type="journal article" date="2005" name="Blood">
        <title>Identification of a human mutation of DMT1 in a patient with microcytic anemia and iron overload.</title>
        <authorList>
            <person name="Mims M.P."/>
            <person name="Guan Y."/>
            <person name="Pospisilova D."/>
            <person name="Priwitzerova M."/>
            <person name="Indrak K."/>
            <person name="Ponka P."/>
            <person name="Divoky V."/>
            <person name="Prchal J.T."/>
        </authorList>
    </citation>
    <scope>VARIANT AHMIO1 ASP-399</scope>
</reference>
<reference key="23">
    <citation type="journal article" date="2006" name="Blood">
        <title>Microcytic anemia and hepatic iron overload in a child with compound heterozygous mutations in DMT1 (SCL11A2).</title>
        <authorList>
            <person name="Iolascon A."/>
            <person name="d'Apolito M."/>
            <person name="Servedio V."/>
            <person name="Cimmino F."/>
            <person name="Piga A."/>
            <person name="Camaschella C."/>
        </authorList>
    </citation>
    <scope>VARIANT AHMIO1 CYS-416</scope>
</reference>
<reference key="24">
    <citation type="journal article" date="2006" name="Blood">
        <title>Two new human DMT1 gene mutations in a patient with microcytic anemia, low ferritinemia, and liver iron overload.</title>
        <authorList>
            <person name="Beaumont C."/>
            <person name="Delaunay J."/>
            <person name="Hetet G."/>
            <person name="Grandchamp B."/>
            <person name="de Montalembert M."/>
            <person name="Tchernia G."/>
        </authorList>
    </citation>
    <scope>VARIANTS AHMIO1 VAL-114 DEL AND VAL-212</scope>
</reference>
<reference key="25">
    <citation type="journal article" date="2006" name="Science">
        <title>The consensus coding sequences of human breast and colorectal cancers.</title>
        <authorList>
            <person name="Sjoeblom T."/>
            <person name="Jones S."/>
            <person name="Wood L.D."/>
            <person name="Parsons D.W."/>
            <person name="Lin J."/>
            <person name="Barber T.D."/>
            <person name="Mandelker D."/>
            <person name="Leary R.J."/>
            <person name="Ptak J."/>
            <person name="Silliman N."/>
            <person name="Szabo S."/>
            <person name="Buckhaults P."/>
            <person name="Farrell C."/>
            <person name="Meeh P."/>
            <person name="Markowitz S.D."/>
            <person name="Willis J."/>
            <person name="Dawson D."/>
            <person name="Willson J.K.V."/>
            <person name="Gazdar A.F."/>
            <person name="Hartigan J."/>
            <person name="Wu L."/>
            <person name="Liu C."/>
            <person name="Parmigiani G."/>
            <person name="Park B.H."/>
            <person name="Bachman K.E."/>
            <person name="Papadopoulos N."/>
            <person name="Vogelstein B."/>
            <person name="Kinzler K.W."/>
            <person name="Velculescu V.E."/>
        </authorList>
    </citation>
    <scope>VARIANT [LARGE SCALE ANALYSIS] THR-48</scope>
</reference>
<organism>
    <name type="scientific">Homo sapiens</name>
    <name type="common">Human</name>
    <dbReference type="NCBI Taxonomy" id="9606"/>
    <lineage>
        <taxon>Eukaryota</taxon>
        <taxon>Metazoa</taxon>
        <taxon>Chordata</taxon>
        <taxon>Craniata</taxon>
        <taxon>Vertebrata</taxon>
        <taxon>Euteleostomi</taxon>
        <taxon>Mammalia</taxon>
        <taxon>Eutheria</taxon>
        <taxon>Euarchontoglires</taxon>
        <taxon>Primates</taxon>
        <taxon>Haplorrhini</taxon>
        <taxon>Catarrhini</taxon>
        <taxon>Hominidae</taxon>
        <taxon>Homo</taxon>
    </lineage>
</organism>
<feature type="chain" id="PRO_0000212594" description="Natural resistance-associated macrophage protein 2">
    <location>
        <begin position="1"/>
        <end position="568"/>
    </location>
</feature>
<feature type="topological domain" description="Cytoplasmic" evidence="3">
    <location>
        <begin position="1"/>
        <end position="69"/>
    </location>
</feature>
<feature type="transmembrane region" description="Helical" evidence="3">
    <location>
        <begin position="70"/>
        <end position="90"/>
    </location>
</feature>
<feature type="topological domain" description="Extracellular" evidence="3">
    <location>
        <begin position="91"/>
        <end position="96"/>
    </location>
</feature>
<feature type="transmembrane region" description="Helical" evidence="3">
    <location>
        <begin position="97"/>
        <end position="117"/>
    </location>
</feature>
<feature type="topological domain" description="Cytoplasmic" evidence="3">
    <location>
        <begin position="118"/>
        <end position="154"/>
    </location>
</feature>
<feature type="transmembrane region" description="Helical" evidence="3">
    <location>
        <begin position="155"/>
        <end position="175"/>
    </location>
</feature>
<feature type="topological domain" description="Extracellular" evidence="3">
    <location>
        <begin position="176"/>
        <end position="179"/>
    </location>
</feature>
<feature type="transmembrane region" description="Helical" evidence="3">
    <location>
        <begin position="180"/>
        <end position="200"/>
    </location>
</feature>
<feature type="topological domain" description="Cytoplasmic" evidence="3">
    <location>
        <begin position="201"/>
        <end position="208"/>
    </location>
</feature>
<feature type="transmembrane region" description="Helical" evidence="3">
    <location>
        <begin position="209"/>
        <end position="229"/>
    </location>
</feature>
<feature type="topological domain" description="Extracellular" evidence="3">
    <location>
        <begin position="230"/>
        <end position="255"/>
    </location>
</feature>
<feature type="transmembrane region" description="Helical" evidence="3">
    <location>
        <begin position="256"/>
        <end position="276"/>
    </location>
</feature>
<feature type="topological domain" description="Cytoplasmic" evidence="3">
    <location>
        <begin position="277"/>
        <end position="301"/>
    </location>
</feature>
<feature type="transmembrane region" description="Helical" evidence="3">
    <location>
        <begin position="302"/>
        <end position="322"/>
    </location>
</feature>
<feature type="topological domain" description="Extracellular" evidence="3">
    <location>
        <begin position="323"/>
        <end position="360"/>
    </location>
</feature>
<feature type="transmembrane region" description="Helical" evidence="3">
    <location>
        <begin position="361"/>
        <end position="381"/>
    </location>
</feature>
<feature type="topological domain" description="Cytoplasmic" evidence="3">
    <location>
        <begin position="382"/>
        <end position="408"/>
    </location>
</feature>
<feature type="transmembrane region" description="Helical" evidence="3">
    <location>
        <begin position="409"/>
        <end position="429"/>
    </location>
</feature>
<feature type="topological domain" description="Extracellular" evidence="3">
    <location>
        <begin position="430"/>
        <end position="440"/>
    </location>
</feature>
<feature type="transmembrane region" description="Helical" evidence="3">
    <location>
        <begin position="441"/>
        <end position="461"/>
    </location>
</feature>
<feature type="topological domain" description="Cytoplasmic" evidence="3">
    <location>
        <begin position="462"/>
        <end position="482"/>
    </location>
</feature>
<feature type="transmembrane region" description="Helical" evidence="3">
    <location>
        <begin position="483"/>
        <end position="503"/>
    </location>
</feature>
<feature type="topological domain" description="Extracellular" evidence="3">
    <location>
        <begin position="504"/>
        <end position="506"/>
    </location>
</feature>
<feature type="transmembrane region" description="Helical" evidence="3">
    <location>
        <begin position="507"/>
        <end position="527"/>
    </location>
</feature>
<feature type="topological domain" description="Cytoplasmic" evidence="3">
    <location>
        <begin position="528"/>
        <end position="568"/>
    </location>
</feature>
<feature type="region of interest" description="Disordered" evidence="4">
    <location>
        <begin position="1"/>
        <end position="40"/>
    </location>
</feature>
<feature type="region of interest" description="Required for early endosome targeting" evidence="6">
    <location>
        <begin position="555"/>
        <end position="559"/>
    </location>
</feature>
<feature type="compositionally biased region" description="Basic and acidic residues" evidence="4">
    <location>
        <begin position="8"/>
        <end position="20"/>
    </location>
</feature>
<feature type="compositionally biased region" description="Polar residues" evidence="4">
    <location>
        <begin position="23"/>
        <end position="40"/>
    </location>
</feature>
<feature type="modified residue" description="Phosphoserine" evidence="2">
    <location>
        <position position="564"/>
    </location>
</feature>
<feature type="modified residue" description="Phosphoserine" evidence="2">
    <location>
        <position position="567"/>
    </location>
</feature>
<feature type="glycosylation site" description="N-linked (GlcNAc...) asparagine" evidence="3">
    <location>
        <position position="336"/>
    </location>
</feature>
<feature type="glycosylation site" description="N-linked (GlcNAc...) asparagine" evidence="3">
    <location>
        <position position="349"/>
    </location>
</feature>
<feature type="splice variant" id="VSP_046058" description="In isoform 5." evidence="23">
    <original>MVLGPEQKMSDD</original>
    <variation>MSTVDYLN</variation>
    <location>
        <begin position="1"/>
        <end position="12"/>
    </location>
</feature>
<feature type="splice variant" id="VSP_038144" description="In isoform 3 and isoform 4." evidence="21 24">
    <original>M</original>
    <variation>MRKKQLKTEAAPHCELKSYSKNSATQVSTM</variation>
    <location>
        <position position="1"/>
    </location>
</feature>
<feature type="splice variant" id="VSP_003595" description="In isoform 1, isoform 3 and isoform 5." evidence="21 23 24 25 26 27">
    <original>CHLGLTAQPELYLLNTMDADSLVSR</original>
    <variation>VSISKGLLTEEATRGYVK</variation>
    <location>
        <begin position="544"/>
        <end position="568"/>
    </location>
</feature>
<feature type="sequence variant" id="VAR_036434" description="In a colorectal cancer sample; somatic mutation; dbSNP:rs760028045." evidence="10">
    <original>A</original>
    <variation>T</variation>
    <location>
        <position position="48"/>
    </location>
</feature>
<feature type="sequence variant" id="VAR_033011" description="In AHMIO1." evidence="9">
    <location>
        <position position="114"/>
    </location>
</feature>
<feature type="sequence variant" id="VAR_033012" description="In AHMIO1; dbSNP:rs121918367." evidence="9">
    <original>G</original>
    <variation>V</variation>
    <location>
        <position position="212"/>
    </location>
</feature>
<feature type="sequence variant" id="VAR_033013" description="In AHMIO1; increased skipping of exon 12; dbSNP:rs121918365." evidence="7">
    <original>E</original>
    <variation>D</variation>
    <location>
        <position position="399"/>
    </location>
</feature>
<feature type="sequence variant" id="VAR_033014" description="In AHMIO1; dbSNP:rs121918366." evidence="8">
    <original>R</original>
    <variation>C</variation>
    <location>
        <position position="416"/>
    </location>
</feature>
<feature type="sequence variant" id="VAR_008882" description="In dbSNP:rs144863268." evidence="20">
    <original>L</original>
    <variation>I</variation>
    <location>
        <position position="435"/>
    </location>
</feature>
<feature type="mutagenesis site" description="Abolishes metal ion transport." evidence="16">
    <original>D</original>
    <variation>A</variation>
    <location>
        <position position="86"/>
    </location>
</feature>
<feature type="mutagenesis site" description="Decreases affinity for divalent metal cations. Impairs metal ion transport." evidence="16">
    <original>N</original>
    <variation>A</variation>
    <location>
        <position position="89"/>
    </location>
</feature>
<feature type="mutagenesis site" description="Abolishes metal ion transport." evidence="16">
    <original>M</original>
    <variation>A</variation>
    <location>
        <position position="265"/>
    </location>
</feature>
<feature type="mutagenesis site" description="Abolishes N-glycosylation; when associated with A-351. Does not affect endosome targeting; when associated with A-351. Impairs sorting to the apical membrane; when associated with A-351." evidence="6">
    <original>S</original>
    <variation>A</variation>
    <location>
        <position position="338"/>
    </location>
</feature>
<feature type="mutagenesis site" description="Abolishes N-glycosylation; when associated with A-338. Does not affect endosome targeting; when associated with A-338. Impairs sorting to the apical membrane; when associated with A-338." evidence="6">
    <original>T</original>
    <variation>A</variation>
    <location>
        <position position="351"/>
    </location>
</feature>
<feature type="mutagenesis site" description="Abolishes localization at early endosomes and leads to localization at late endosomes and lysosomes." evidence="6">
    <original>Y</original>
    <variation>A</variation>
    <location>
        <position position="555"/>
    </location>
</feature>
<feature type="mutagenesis site" description="Abolishes localization at early endosomes and leads to localization at late endosomes and lysosomes." evidence="6">
    <original>L</original>
    <variation>A</variation>
    <location>
        <position position="557"/>
    </location>
</feature>
<feature type="sequence conflict" description="In Ref. 11; AAA79219." evidence="28" ref="11">
    <original>PE</original>
    <variation>GM</variation>
    <location>
        <begin position="58"/>
        <end position="59"/>
    </location>
</feature>
<feature type="sequence conflict" description="In Ref. 11; AAA79219." evidence="28" ref="11">
    <original>S</original>
    <variation>T</variation>
    <location>
        <position position="81"/>
    </location>
</feature>
<feature type="sequence conflict" description="In Ref. 10; AAI00015." evidence="28" ref="10">
    <original>Q</original>
    <variation>K</variation>
    <location>
        <position position="119"/>
    </location>
</feature>
<feature type="sequence conflict" description="In Ref. 11; AAA79219." evidence="28" ref="11">
    <original>R</original>
    <variation>K</variation>
    <location>
        <position position="124"/>
    </location>
</feature>
<feature type="sequence conflict" description="In Ref. 11; AAA79219." evidence="28" ref="11">
    <original>SL</original>
    <variation>YV</variation>
    <location>
        <begin position="462"/>
        <end position="463"/>
    </location>
</feature>
<feature type="sequence conflict" description="In Ref. 11; AAA79219." evidence="28" ref="11">
    <original>W</original>
    <variation>C</variation>
    <location>
        <position position="476"/>
    </location>
</feature>
<feature type="strand" evidence="34">
    <location>
        <begin position="554"/>
        <end position="556"/>
    </location>
</feature>
<feature type="sequence conflict" description="In Ref. 6; BAG59096/BAH14878." evidence="28" ref="6">
    <original>Y</original>
    <variation>S</variation>
    <location sequence="P49281-5">
        <position position="6"/>
    </location>
</feature>
<evidence type="ECO:0000250" key="1">
    <source>
        <dbReference type="UniProtKB" id="O54902"/>
    </source>
</evidence>
<evidence type="ECO:0000250" key="2">
    <source>
        <dbReference type="UniProtKB" id="P49282"/>
    </source>
</evidence>
<evidence type="ECO:0000255" key="3"/>
<evidence type="ECO:0000256" key="4">
    <source>
        <dbReference type="SAM" id="MobiDB-lite"/>
    </source>
</evidence>
<evidence type="ECO:0000269" key="5">
    <source>
    </source>
</evidence>
<evidence type="ECO:0000269" key="6">
    <source>
    </source>
</evidence>
<evidence type="ECO:0000269" key="7">
    <source>
    </source>
</evidence>
<evidence type="ECO:0000269" key="8">
    <source>
    </source>
</evidence>
<evidence type="ECO:0000269" key="9">
    <source>
    </source>
</evidence>
<evidence type="ECO:0000269" key="10">
    <source>
    </source>
</evidence>
<evidence type="ECO:0000269" key="11">
    <source>
    </source>
</evidence>
<evidence type="ECO:0000269" key="12">
    <source>
    </source>
</evidence>
<evidence type="ECO:0000269" key="13">
    <source>
    </source>
</evidence>
<evidence type="ECO:0000269" key="14">
    <source>
    </source>
</evidence>
<evidence type="ECO:0000269" key="15">
    <source>
    </source>
</evidence>
<evidence type="ECO:0000269" key="16">
    <source>
    </source>
</evidence>
<evidence type="ECO:0000269" key="17">
    <source>
    </source>
</evidence>
<evidence type="ECO:0000269" key="18">
    <source>
    </source>
</evidence>
<evidence type="ECO:0000269" key="19">
    <source>
    </source>
</evidence>
<evidence type="ECO:0000269" key="20">
    <source>
    </source>
</evidence>
<evidence type="ECO:0000303" key="21">
    <source>
    </source>
</evidence>
<evidence type="ECO:0000303" key="22">
    <source>
    </source>
</evidence>
<evidence type="ECO:0000303" key="23">
    <source>
    </source>
</evidence>
<evidence type="ECO:0000303" key="24">
    <source>
    </source>
</evidence>
<evidence type="ECO:0000303" key="25">
    <source>
    </source>
</evidence>
<evidence type="ECO:0000303" key="26">
    <source>
    </source>
</evidence>
<evidence type="ECO:0000303" key="27">
    <source>
    </source>
</evidence>
<evidence type="ECO:0000305" key="28"/>
<evidence type="ECO:0000305" key="29">
    <source>
    </source>
</evidence>
<evidence type="ECO:0000305" key="30">
    <source>
    </source>
</evidence>
<evidence type="ECO:0000305" key="31">
    <source>
    </source>
</evidence>
<evidence type="ECO:0000305" key="32">
    <source>
    </source>
</evidence>
<evidence type="ECO:0000305" key="33">
    <source>
    </source>
</evidence>
<evidence type="ECO:0007829" key="34">
    <source>
        <dbReference type="PDB" id="5F0P"/>
    </source>
</evidence>
<dbReference type="EMBL" id="AB004857">
    <property type="protein sequence ID" value="BAA24933.1"/>
    <property type="molecule type" value="mRNA"/>
</dbReference>
<dbReference type="EMBL" id="AB015355">
    <property type="protein sequence ID" value="BAA34374.1"/>
    <property type="status" value="ALT_SEQ"/>
    <property type="molecule type" value="Genomic_DNA"/>
</dbReference>
<dbReference type="EMBL" id="AF064482">
    <property type="protein sequence ID" value="AAC21460.1"/>
    <property type="molecule type" value="Genomic_DNA"/>
</dbReference>
<dbReference type="EMBL" id="AF064476">
    <property type="protein sequence ID" value="AAC21460.1"/>
    <property type="status" value="JOINED"/>
    <property type="molecule type" value="Genomic_DNA"/>
</dbReference>
<dbReference type="EMBL" id="AF064477">
    <property type="protein sequence ID" value="AAC21460.1"/>
    <property type="status" value="JOINED"/>
    <property type="molecule type" value="Genomic_DNA"/>
</dbReference>
<dbReference type="EMBL" id="AF064478">
    <property type="protein sequence ID" value="AAC21460.1"/>
    <property type="status" value="JOINED"/>
    <property type="molecule type" value="Genomic_DNA"/>
</dbReference>
<dbReference type="EMBL" id="AF064479">
    <property type="protein sequence ID" value="AAC21460.1"/>
    <property type="status" value="JOINED"/>
    <property type="molecule type" value="Genomic_DNA"/>
</dbReference>
<dbReference type="EMBL" id="AF064480">
    <property type="protein sequence ID" value="AAC21460.1"/>
    <property type="status" value="JOINED"/>
    <property type="molecule type" value="Genomic_DNA"/>
</dbReference>
<dbReference type="EMBL" id="AF064481">
    <property type="protein sequence ID" value="AAC21460.1"/>
    <property type="status" value="JOINED"/>
    <property type="molecule type" value="Genomic_DNA"/>
</dbReference>
<dbReference type="EMBL" id="AF064483">
    <property type="protein sequence ID" value="AAC21461.1"/>
    <property type="molecule type" value="Genomic_DNA"/>
</dbReference>
<dbReference type="EMBL" id="AF064476">
    <property type="protein sequence ID" value="AAC21461.1"/>
    <property type="status" value="JOINED"/>
    <property type="molecule type" value="Genomic_DNA"/>
</dbReference>
<dbReference type="EMBL" id="AF064477">
    <property type="protein sequence ID" value="AAC21461.1"/>
    <property type="status" value="JOINED"/>
    <property type="molecule type" value="Genomic_DNA"/>
</dbReference>
<dbReference type="EMBL" id="AF064478">
    <property type="protein sequence ID" value="AAC21461.1"/>
    <property type="status" value="JOINED"/>
    <property type="molecule type" value="Genomic_DNA"/>
</dbReference>
<dbReference type="EMBL" id="AF064479">
    <property type="protein sequence ID" value="AAC21461.1"/>
    <property type="status" value="JOINED"/>
    <property type="molecule type" value="Genomic_DNA"/>
</dbReference>
<dbReference type="EMBL" id="AF064480">
    <property type="protein sequence ID" value="AAC21461.1"/>
    <property type="status" value="JOINED"/>
    <property type="molecule type" value="Genomic_DNA"/>
</dbReference>
<dbReference type="EMBL" id="AF064481">
    <property type="protein sequence ID" value="AAC21461.1"/>
    <property type="status" value="JOINED"/>
    <property type="molecule type" value="Genomic_DNA"/>
</dbReference>
<dbReference type="EMBL" id="AF064482">
    <property type="protein sequence ID" value="AAC21461.1"/>
    <property type="status" value="JOINED"/>
    <property type="molecule type" value="Genomic_DNA"/>
</dbReference>
<dbReference type="EMBL" id="AF064484">
    <property type="protein sequence ID" value="AAC21459.1"/>
    <property type="molecule type" value="mRNA"/>
</dbReference>
<dbReference type="EMBL" id="AJ493662">
    <property type="protein sequence ID" value="CAD38517.1"/>
    <property type="molecule type" value="mRNA"/>
</dbReference>
<dbReference type="EMBL" id="AF046997">
    <property type="protein sequence ID" value="AAC18078.1"/>
    <property type="molecule type" value="mRNA"/>
</dbReference>
<dbReference type="EMBL" id="AK094735">
    <property type="protein sequence ID" value="BAG52920.1"/>
    <property type="molecule type" value="mRNA"/>
</dbReference>
<dbReference type="EMBL" id="AK296445">
    <property type="protein sequence ID" value="BAG59096.1"/>
    <property type="molecule type" value="mRNA"/>
</dbReference>
<dbReference type="EMBL" id="AK316507">
    <property type="protein sequence ID" value="BAH14878.1"/>
    <property type="molecule type" value="mRNA"/>
</dbReference>
<dbReference type="EMBL" id="AB062284">
    <property type="protein sequence ID" value="BAB93467.1"/>
    <property type="molecule type" value="mRNA"/>
</dbReference>
<dbReference type="EMBL" id="AC087884">
    <property type="status" value="NOT_ANNOTATED_CDS"/>
    <property type="molecule type" value="Genomic_DNA"/>
</dbReference>
<dbReference type="EMBL" id="CH471111">
    <property type="protein sequence ID" value="EAW58159.1"/>
    <property type="molecule type" value="Genomic_DNA"/>
</dbReference>
<dbReference type="EMBL" id="BC002592">
    <property type="protein sequence ID" value="AAH02592.1"/>
    <property type="status" value="ALT_INIT"/>
    <property type="molecule type" value="mRNA"/>
</dbReference>
<dbReference type="EMBL" id="BC100014">
    <property type="protein sequence ID" value="AAI00015.1"/>
    <property type="molecule type" value="mRNA"/>
</dbReference>
<dbReference type="EMBL" id="L37347">
    <property type="protein sequence ID" value="AAA79219.1"/>
    <property type="molecule type" value="mRNA"/>
</dbReference>
<dbReference type="CCDS" id="CCDS53791.1">
    <molecule id="P49281-5"/>
</dbReference>
<dbReference type="CCDS" id="CCDS53792.1">
    <molecule id="P49281-1"/>
</dbReference>
<dbReference type="CCDS" id="CCDS53793.1">
    <molecule id="P49281-3"/>
</dbReference>
<dbReference type="CCDS" id="CCDS8805.1">
    <molecule id="P49281-2"/>
</dbReference>
<dbReference type="CCDS" id="CCDS91695.1">
    <molecule id="P49281-4"/>
</dbReference>
<dbReference type="PIR" id="I57022">
    <property type="entry name" value="I57022"/>
</dbReference>
<dbReference type="RefSeq" id="NP_000608.1">
    <molecule id="P49281-2"/>
    <property type="nucleotide sequence ID" value="NM_000617.3"/>
</dbReference>
<dbReference type="RefSeq" id="NP_001167596.1">
    <molecule id="P49281-3"/>
    <property type="nucleotide sequence ID" value="NM_001174125.2"/>
</dbReference>
<dbReference type="RefSeq" id="NP_001167597.1">
    <molecule id="P49281-1"/>
    <property type="nucleotide sequence ID" value="NM_001174126.2"/>
</dbReference>
<dbReference type="RefSeq" id="NP_001167598.1">
    <molecule id="P49281-1"/>
    <property type="nucleotide sequence ID" value="NM_001174127.2"/>
</dbReference>
<dbReference type="RefSeq" id="NP_001167599.1">
    <molecule id="P49281-2"/>
    <property type="nucleotide sequence ID" value="NM_001174128.2"/>
</dbReference>
<dbReference type="RefSeq" id="NP_001167600.1">
    <molecule id="P49281-2"/>
    <property type="nucleotide sequence ID" value="NM_001174129.2"/>
</dbReference>
<dbReference type="RefSeq" id="NP_001167601.1">
    <molecule id="P49281-5"/>
    <property type="nucleotide sequence ID" value="NM_001174130.2"/>
</dbReference>
<dbReference type="RefSeq" id="NP_001366375.1">
    <molecule id="P49281-4"/>
    <property type="nucleotide sequence ID" value="NM_001379446.1"/>
</dbReference>
<dbReference type="RefSeq" id="NP_001366376.1">
    <molecule id="P49281-1"/>
    <property type="nucleotide sequence ID" value="NM_001379447.2"/>
</dbReference>
<dbReference type="RefSeq" id="NP_001366384.1">
    <molecule id="P49281-3"/>
    <property type="nucleotide sequence ID" value="NM_001379455.1"/>
</dbReference>
<dbReference type="RefSeq" id="NP_001401673.1">
    <molecule id="P49281-2"/>
    <property type="nucleotide sequence ID" value="NM_001414744.1"/>
</dbReference>
<dbReference type="RefSeq" id="NP_001401674.1">
    <molecule id="P49281-2"/>
    <property type="nucleotide sequence ID" value="NM_001414745.1"/>
</dbReference>
<dbReference type="RefSeq" id="NP_001401675.1">
    <molecule id="P49281-2"/>
    <property type="nucleotide sequence ID" value="NM_001414746.1"/>
</dbReference>
<dbReference type="RefSeq" id="XP_005268968.1">
    <property type="nucleotide sequence ID" value="XM_005268911.3"/>
</dbReference>
<dbReference type="RefSeq" id="XP_011536706.1">
    <molecule id="P49281-1"/>
    <property type="nucleotide sequence ID" value="XM_011538404.4"/>
</dbReference>
<dbReference type="RefSeq" id="XP_011536707.1">
    <molecule id="P49281-1"/>
    <property type="nucleotide sequence ID" value="XM_011538405.4"/>
</dbReference>
<dbReference type="RefSeq" id="XP_016874844.1">
    <property type="nucleotide sequence ID" value="XM_017019355.1"/>
</dbReference>
<dbReference type="RefSeq" id="XP_047284843.1">
    <molecule id="P49281-4"/>
    <property type="nucleotide sequence ID" value="XM_047428887.1"/>
</dbReference>
<dbReference type="RefSeq" id="XP_054228099.1">
    <molecule id="P49281-4"/>
    <property type="nucleotide sequence ID" value="XM_054372124.1"/>
</dbReference>
<dbReference type="RefSeq" id="XP_054228100.1">
    <molecule id="P49281-1"/>
    <property type="nucleotide sequence ID" value="XM_054372125.1"/>
</dbReference>
<dbReference type="RefSeq" id="XP_054228101.1">
    <molecule id="P49281-1"/>
    <property type="nucleotide sequence ID" value="XM_054372126.1"/>
</dbReference>
<dbReference type="PDB" id="5F0L">
    <property type="method" value="X-ray"/>
    <property type="resolution" value="3.20 A"/>
    <property type="chains" value="D=545-568"/>
</dbReference>
<dbReference type="PDB" id="5F0M">
    <property type="method" value="X-ray"/>
    <property type="resolution" value="3.10 A"/>
    <property type="chains" value="D=549-560"/>
</dbReference>
<dbReference type="PDB" id="5F0P">
    <property type="method" value="X-ray"/>
    <property type="resolution" value="2.78 A"/>
    <property type="chains" value="D=549-560"/>
</dbReference>
<dbReference type="PDB" id="7BLO">
    <property type="method" value="EM"/>
    <property type="resolution" value="9.50 A"/>
    <property type="chains" value="H/N=551-560"/>
</dbReference>
<dbReference type="PDB" id="7BLQ">
    <property type="method" value="EM"/>
    <property type="resolution" value="9.20 A"/>
    <property type="chains" value="U/V=551-560"/>
</dbReference>
<dbReference type="PDB" id="9F6N">
    <property type="method" value="EM"/>
    <property type="resolution" value="3.60 A"/>
    <property type="chains" value="A=1-543"/>
</dbReference>
<dbReference type="PDB" id="9F6O">
    <property type="method" value="EM"/>
    <property type="resolution" value="3.90 A"/>
    <property type="chains" value="A=1-543"/>
</dbReference>
<dbReference type="PDBsum" id="5F0L"/>
<dbReference type="PDBsum" id="5F0M"/>
<dbReference type="PDBsum" id="5F0P"/>
<dbReference type="PDBsum" id="7BLO"/>
<dbReference type="PDBsum" id="7BLQ"/>
<dbReference type="PDBsum" id="9F6N"/>
<dbReference type="PDBsum" id="9F6O"/>
<dbReference type="EMDB" id="EMD-50235"/>
<dbReference type="EMDB" id="EMD-50236"/>
<dbReference type="SMR" id="P49281"/>
<dbReference type="BioGRID" id="110950">
    <property type="interactions" value="51"/>
</dbReference>
<dbReference type="CORUM" id="P49281"/>
<dbReference type="DIP" id="DIP-48957N"/>
<dbReference type="FunCoup" id="P49281">
    <property type="interactions" value="1948"/>
</dbReference>
<dbReference type="IntAct" id="P49281">
    <property type="interactions" value="20"/>
</dbReference>
<dbReference type="STRING" id="9606.ENSP00000378364"/>
<dbReference type="BindingDB" id="P49281"/>
<dbReference type="ChEMBL" id="CHEMBL1932895"/>
<dbReference type="DrugBank" id="DB09130">
    <property type="generic name" value="Copper"/>
</dbReference>
<dbReference type="DrugBank" id="DB15598">
    <property type="generic name" value="Ferric maltol"/>
</dbReference>
<dbReference type="DrugBank" id="DB13257">
    <property type="generic name" value="Ferrous sulfate anhydrous"/>
</dbReference>
<dbReference type="DrugBank" id="DB06796">
    <property type="generic name" value="Mangafodipir"/>
</dbReference>
<dbReference type="DrugBank" id="DB06757">
    <property type="generic name" value="Manganese cation"/>
</dbReference>
<dbReference type="DrugBank" id="DB14520">
    <property type="generic name" value="Tetraferric tricitrate decahydrate"/>
</dbReference>
<dbReference type="GuidetoPHARMACOLOGY" id="967"/>
<dbReference type="TCDB" id="2.A.55.2.1">
    <property type="family name" value="the metal ion (mn(2+)-iron) transporter (nramp) family"/>
</dbReference>
<dbReference type="GlyCosmos" id="P49281">
    <property type="glycosylation" value="2 sites, No reported glycans"/>
</dbReference>
<dbReference type="GlyGen" id="P49281">
    <property type="glycosylation" value="2 sites, 1 N-linked glycan (2 sites)"/>
</dbReference>
<dbReference type="iPTMnet" id="P49281"/>
<dbReference type="PhosphoSitePlus" id="P49281"/>
<dbReference type="SwissPalm" id="P49281"/>
<dbReference type="BioMuta" id="SLC11A2"/>
<dbReference type="DMDM" id="8247934"/>
<dbReference type="jPOST" id="P49281"/>
<dbReference type="MassIVE" id="P49281"/>
<dbReference type="PaxDb" id="9606-ENSP00000378364"/>
<dbReference type="PeptideAtlas" id="P49281"/>
<dbReference type="ProteomicsDB" id="27377"/>
<dbReference type="ProteomicsDB" id="55979">
    <molecule id="P49281-1"/>
</dbReference>
<dbReference type="ProteomicsDB" id="55980">
    <molecule id="P49281-2"/>
</dbReference>
<dbReference type="ProteomicsDB" id="55981">
    <molecule id="P49281-3"/>
</dbReference>
<dbReference type="ProteomicsDB" id="55982">
    <molecule id="P49281-4"/>
</dbReference>
<dbReference type="Pumba" id="P49281"/>
<dbReference type="Antibodypedia" id="26282">
    <property type="antibodies" value="371 antibodies from 32 providers"/>
</dbReference>
<dbReference type="DNASU" id="4891"/>
<dbReference type="Ensembl" id="ENST00000262052.9">
    <molecule id="P49281-2"/>
    <property type="protein sequence ID" value="ENSP00000262052.5"/>
    <property type="gene ID" value="ENSG00000110911.17"/>
</dbReference>
<dbReference type="Ensembl" id="ENST00000394904.9">
    <molecule id="P49281-3"/>
    <property type="protein sequence ID" value="ENSP00000378364.3"/>
    <property type="gene ID" value="ENSG00000110911.17"/>
</dbReference>
<dbReference type="Ensembl" id="ENST00000541174.6">
    <molecule id="P49281-2"/>
    <property type="protein sequence ID" value="ENSP00000444542.2"/>
    <property type="gene ID" value="ENSG00000110911.17"/>
</dbReference>
<dbReference type="Ensembl" id="ENST00000545993.7">
    <molecule id="P49281-5"/>
    <property type="protein sequence ID" value="ENSP00000442810.2"/>
    <property type="gene ID" value="ENSG00000110911.17"/>
</dbReference>
<dbReference type="Ensembl" id="ENST00000546636.5">
    <molecule id="P49281-1"/>
    <property type="protein sequence ID" value="ENSP00000449008.1"/>
    <property type="gene ID" value="ENSG00000110911.17"/>
</dbReference>
<dbReference type="Ensembl" id="ENST00000547198.5">
    <molecule id="P49281-1"/>
    <property type="protein sequence ID" value="ENSP00000446769.1"/>
    <property type="gene ID" value="ENSG00000110911.17"/>
</dbReference>
<dbReference type="Ensembl" id="ENST00000547688.7">
    <molecule id="P49281-4"/>
    <property type="protein sequence ID" value="ENSP00000449200.2"/>
    <property type="gene ID" value="ENSG00000110911.17"/>
</dbReference>
<dbReference type="Ensembl" id="ENST00000644495.1">
    <molecule id="P49281-1"/>
    <property type="protein sequence ID" value="ENSP00000494107.1"/>
    <property type="gene ID" value="ENSG00000110911.17"/>
</dbReference>
<dbReference type="GeneID" id="4891"/>
<dbReference type="KEGG" id="hsa:4891"/>
<dbReference type="MANE-Select" id="ENST00000262052.9">
    <molecule id="P49281-2"/>
    <property type="protein sequence ID" value="ENSP00000262052.5"/>
    <property type="RefSeq nucleotide sequence ID" value="NM_000617.3"/>
    <property type="RefSeq protein sequence ID" value="NP_000608.1"/>
</dbReference>
<dbReference type="UCSC" id="uc001rxc.5">
    <molecule id="P49281-1"/>
    <property type="organism name" value="human"/>
</dbReference>
<dbReference type="AGR" id="HGNC:10908"/>
<dbReference type="CTD" id="4891"/>
<dbReference type="DisGeNET" id="4891"/>
<dbReference type="GeneCards" id="SLC11A2"/>
<dbReference type="HGNC" id="HGNC:10908">
    <property type="gene designation" value="SLC11A2"/>
</dbReference>
<dbReference type="HPA" id="ENSG00000110911">
    <property type="expression patterns" value="Low tissue specificity"/>
</dbReference>
<dbReference type="MalaCards" id="SLC11A2"/>
<dbReference type="MIM" id="206100">
    <property type="type" value="phenotype"/>
</dbReference>
<dbReference type="MIM" id="600523">
    <property type="type" value="gene"/>
</dbReference>
<dbReference type="neXtProt" id="NX_P49281"/>
<dbReference type="OpenTargets" id="ENSG00000110911"/>
<dbReference type="Orphanet" id="83642">
    <property type="disease" value="Microcytic anemia with liver iron overload"/>
</dbReference>
<dbReference type="PharmGKB" id="PA259"/>
<dbReference type="VEuPathDB" id="HostDB:ENSG00000110911"/>
<dbReference type="eggNOG" id="KOG1291">
    <property type="taxonomic scope" value="Eukaryota"/>
</dbReference>
<dbReference type="GeneTree" id="ENSGT00940000155330"/>
<dbReference type="InParanoid" id="P49281"/>
<dbReference type="OMA" id="PWMQFYQ"/>
<dbReference type="OrthoDB" id="409173at2759"/>
<dbReference type="PAN-GO" id="P49281">
    <property type="GO annotations" value="19 GO annotations based on evolutionary models"/>
</dbReference>
<dbReference type="PhylomeDB" id="P49281"/>
<dbReference type="TreeFam" id="TF315185"/>
<dbReference type="PathwayCommons" id="P49281"/>
<dbReference type="Reactome" id="R-HSA-425410">
    <property type="pathway name" value="Metal ion SLC transporters"/>
</dbReference>
<dbReference type="Reactome" id="R-HSA-5619048">
    <property type="pathway name" value="Defective SLC11A2 causes hypochromic microcytic anemia, with iron overload 1 (AHMIO1)"/>
</dbReference>
<dbReference type="Reactome" id="R-HSA-917937">
    <property type="pathway name" value="Iron uptake and transport"/>
</dbReference>
<dbReference type="SignaLink" id="P49281"/>
<dbReference type="SIGNOR" id="P49281"/>
<dbReference type="BioGRID-ORCS" id="4891">
    <property type="hits" value="20 hits in 1171 CRISPR screens"/>
</dbReference>
<dbReference type="ChiTaRS" id="SLC11A2">
    <property type="organism name" value="human"/>
</dbReference>
<dbReference type="GeneWiki" id="DMT1"/>
<dbReference type="GenomeRNAi" id="4891"/>
<dbReference type="Pharos" id="P49281">
    <property type="development level" value="Tchem"/>
</dbReference>
<dbReference type="PRO" id="PR:P49281"/>
<dbReference type="Proteomes" id="UP000005640">
    <property type="component" value="Chromosome 12"/>
</dbReference>
<dbReference type="RNAct" id="P49281">
    <property type="molecule type" value="protein"/>
</dbReference>
<dbReference type="Bgee" id="ENSG00000110911">
    <property type="expression patterns" value="Expressed in inferior vagus X ganglion and 209 other cell types or tissues"/>
</dbReference>
<dbReference type="ExpressionAtlas" id="P49281">
    <property type="expression patterns" value="baseline and differential"/>
</dbReference>
<dbReference type="GO" id="GO:0045177">
    <property type="term" value="C:apical part of cell"/>
    <property type="evidence" value="ECO:0000314"/>
    <property type="project" value="UniProtKB"/>
</dbReference>
<dbReference type="GO" id="GO:0016324">
    <property type="term" value="C:apical plasma membrane"/>
    <property type="evidence" value="ECO:0000314"/>
    <property type="project" value="UniProtKB"/>
</dbReference>
<dbReference type="GO" id="GO:0045178">
    <property type="term" value="C:basal part of cell"/>
    <property type="evidence" value="ECO:0000314"/>
    <property type="project" value="UniProtKB"/>
</dbReference>
<dbReference type="GO" id="GO:0031526">
    <property type="term" value="C:brush border membrane"/>
    <property type="evidence" value="ECO:0000250"/>
    <property type="project" value="BHF-UCL"/>
</dbReference>
<dbReference type="GO" id="GO:0009986">
    <property type="term" value="C:cell surface"/>
    <property type="evidence" value="ECO:0000314"/>
    <property type="project" value="UniProtKB"/>
</dbReference>
<dbReference type="GO" id="GO:0005737">
    <property type="term" value="C:cytoplasm"/>
    <property type="evidence" value="ECO:0000314"/>
    <property type="project" value="BHF-UCL"/>
</dbReference>
<dbReference type="GO" id="GO:0031410">
    <property type="term" value="C:cytoplasmic vesicle"/>
    <property type="evidence" value="ECO:0000314"/>
    <property type="project" value="UniProtKB"/>
</dbReference>
<dbReference type="GO" id="GO:0005769">
    <property type="term" value="C:early endosome"/>
    <property type="evidence" value="ECO:0000314"/>
    <property type="project" value="UniProtKB"/>
</dbReference>
<dbReference type="GO" id="GO:0031901">
    <property type="term" value="C:early endosome membrane"/>
    <property type="evidence" value="ECO:0007669"/>
    <property type="project" value="UniProtKB-SubCell"/>
</dbReference>
<dbReference type="GO" id="GO:0010008">
    <property type="term" value="C:endosome membrane"/>
    <property type="evidence" value="ECO:0000318"/>
    <property type="project" value="GO_Central"/>
</dbReference>
<dbReference type="GO" id="GO:1903561">
    <property type="term" value="C:extracellular vesicle"/>
    <property type="evidence" value="ECO:0000314"/>
    <property type="project" value="UniProtKB"/>
</dbReference>
<dbReference type="GO" id="GO:0005794">
    <property type="term" value="C:Golgi apparatus"/>
    <property type="evidence" value="ECO:0007669"/>
    <property type="project" value="UniProtKB-SubCell"/>
</dbReference>
<dbReference type="GO" id="GO:0005770">
    <property type="term" value="C:late endosome"/>
    <property type="evidence" value="ECO:0000314"/>
    <property type="project" value="UniProtKB"/>
</dbReference>
<dbReference type="GO" id="GO:0031902">
    <property type="term" value="C:late endosome membrane"/>
    <property type="evidence" value="ECO:0000314"/>
    <property type="project" value="BHF-UCL"/>
</dbReference>
<dbReference type="GO" id="GO:0005765">
    <property type="term" value="C:lysosomal membrane"/>
    <property type="evidence" value="ECO:0000314"/>
    <property type="project" value="BHF-UCL"/>
</dbReference>
<dbReference type="GO" id="GO:0005764">
    <property type="term" value="C:lysosome"/>
    <property type="evidence" value="ECO:0000314"/>
    <property type="project" value="UniProtKB"/>
</dbReference>
<dbReference type="GO" id="GO:0016020">
    <property type="term" value="C:membrane"/>
    <property type="evidence" value="ECO:0007005"/>
    <property type="project" value="UniProtKB"/>
</dbReference>
<dbReference type="GO" id="GO:0005741">
    <property type="term" value="C:mitochondrial outer membrane"/>
    <property type="evidence" value="ECO:0007669"/>
    <property type="project" value="UniProtKB-SubCell"/>
</dbReference>
<dbReference type="GO" id="GO:0005739">
    <property type="term" value="C:mitochondrion"/>
    <property type="evidence" value="ECO:0000314"/>
    <property type="project" value="HPA"/>
</dbReference>
<dbReference type="GO" id="GO:0005634">
    <property type="term" value="C:nucleus"/>
    <property type="evidence" value="ECO:0000314"/>
    <property type="project" value="UniProtKB"/>
</dbReference>
<dbReference type="GO" id="GO:0070826">
    <property type="term" value="C:paraferritin complex"/>
    <property type="evidence" value="ECO:0000314"/>
    <property type="project" value="UniProtKB"/>
</dbReference>
<dbReference type="GO" id="GO:0048471">
    <property type="term" value="C:perinuclear region of cytoplasm"/>
    <property type="evidence" value="ECO:0000314"/>
    <property type="project" value="BHF-UCL"/>
</dbReference>
<dbReference type="GO" id="GO:0005886">
    <property type="term" value="C:plasma membrane"/>
    <property type="evidence" value="ECO:0000314"/>
    <property type="project" value="UniProtKB"/>
</dbReference>
<dbReference type="GO" id="GO:0055037">
    <property type="term" value="C:recycling endosome"/>
    <property type="evidence" value="ECO:0000314"/>
    <property type="project" value="UniProtKB"/>
</dbReference>
<dbReference type="GO" id="GO:0055038">
    <property type="term" value="C:recycling endosome membrane"/>
    <property type="evidence" value="ECO:0007669"/>
    <property type="project" value="UniProtKB-SubCell"/>
</dbReference>
<dbReference type="GO" id="GO:0005802">
    <property type="term" value="C:trans-Golgi network"/>
    <property type="evidence" value="ECO:0000314"/>
    <property type="project" value="UniProtKB"/>
</dbReference>
<dbReference type="GO" id="GO:0005773">
    <property type="term" value="C:vacuole"/>
    <property type="evidence" value="ECO:0000315"/>
    <property type="project" value="BHF-UCL"/>
</dbReference>
<dbReference type="GO" id="GO:0046870">
    <property type="term" value="F:cadmium ion binding"/>
    <property type="evidence" value="ECO:0000314"/>
    <property type="project" value="UniProtKB"/>
</dbReference>
<dbReference type="GO" id="GO:0015086">
    <property type="term" value="F:cadmium ion transmembrane transporter activity"/>
    <property type="evidence" value="ECO:0000314"/>
    <property type="project" value="BHF-UCL"/>
</dbReference>
<dbReference type="GO" id="GO:0015087">
    <property type="term" value="F:cobalt ion transmembrane transporter activity"/>
    <property type="evidence" value="ECO:0000314"/>
    <property type="project" value="UniProtKB"/>
</dbReference>
<dbReference type="GO" id="GO:0005375">
    <property type="term" value="F:copper ion transmembrane transporter activity"/>
    <property type="evidence" value="ECO:0000314"/>
    <property type="project" value="BHF-UCL"/>
</dbReference>
<dbReference type="GO" id="GO:0015093">
    <property type="term" value="F:ferrous iron transmembrane transporter activity"/>
    <property type="evidence" value="ECO:0000314"/>
    <property type="project" value="BHF-UCL"/>
</dbReference>
<dbReference type="GO" id="GO:0022890">
    <property type="term" value="F:inorganic cation transmembrane transporter activity"/>
    <property type="evidence" value="ECO:0000316"/>
    <property type="project" value="UniProtKB"/>
</dbReference>
<dbReference type="GO" id="GO:0005381">
    <property type="term" value="F:iron ion transmembrane transporter activity"/>
    <property type="evidence" value="ECO:0000304"/>
    <property type="project" value="Reactome"/>
</dbReference>
<dbReference type="GO" id="GO:0015094">
    <property type="term" value="F:lead ion transmembrane transporter activity"/>
    <property type="evidence" value="ECO:0000314"/>
    <property type="project" value="BHF-UCL"/>
</dbReference>
<dbReference type="GO" id="GO:0005384">
    <property type="term" value="F:manganese ion transmembrane transporter activity"/>
    <property type="evidence" value="ECO:0000314"/>
    <property type="project" value="BHF-UCL"/>
</dbReference>
<dbReference type="GO" id="GO:0015099">
    <property type="term" value="F:nickel cation transmembrane transporter activity"/>
    <property type="evidence" value="ECO:0000314"/>
    <property type="project" value="UniProtKB"/>
</dbReference>
<dbReference type="GO" id="GO:1905394">
    <property type="term" value="F:retromer complex binding"/>
    <property type="evidence" value="ECO:0000314"/>
    <property type="project" value="UniProtKB"/>
</dbReference>
<dbReference type="GO" id="GO:0015295">
    <property type="term" value="F:solute:proton symporter activity"/>
    <property type="evidence" value="ECO:0000314"/>
    <property type="project" value="UniProtKB"/>
</dbReference>
<dbReference type="GO" id="GO:0046915">
    <property type="term" value="F:transition metal ion transmembrane transporter activity"/>
    <property type="evidence" value="ECO:0000314"/>
    <property type="project" value="UniProtKB"/>
</dbReference>
<dbReference type="GO" id="GO:0015100">
    <property type="term" value="F:vanadium ion transmembrane transporter activity"/>
    <property type="evidence" value="ECO:0000314"/>
    <property type="project" value="UniProtKB"/>
</dbReference>
<dbReference type="GO" id="GO:0005385">
    <property type="term" value="F:zinc ion transmembrane transporter activity"/>
    <property type="evidence" value="ECO:0000314"/>
    <property type="project" value="UniProtKB"/>
</dbReference>
<dbReference type="GO" id="GO:0070574">
    <property type="term" value="P:cadmium ion transmembrane transport"/>
    <property type="evidence" value="ECO:0000314"/>
    <property type="project" value="UniProtKB"/>
</dbReference>
<dbReference type="GO" id="GO:0034599">
    <property type="term" value="P:cellular response to oxidative stress"/>
    <property type="evidence" value="ECO:0000314"/>
    <property type="project" value="UniProtKB"/>
</dbReference>
<dbReference type="GO" id="GO:0006824">
    <property type="term" value="P:cobalt ion transport"/>
    <property type="evidence" value="ECO:0000314"/>
    <property type="project" value="UniProtKB"/>
</dbReference>
<dbReference type="GO" id="GO:0006825">
    <property type="term" value="P:copper ion transport"/>
    <property type="evidence" value="ECO:0000314"/>
    <property type="project" value="BHF-UCL"/>
</dbReference>
<dbReference type="GO" id="GO:0048813">
    <property type="term" value="P:dendrite morphogenesis"/>
    <property type="evidence" value="ECO:0007669"/>
    <property type="project" value="Ensembl"/>
</dbReference>
<dbReference type="GO" id="GO:0003032">
    <property type="term" value="P:detection of oxygen"/>
    <property type="evidence" value="ECO:0000270"/>
    <property type="project" value="UniProtKB"/>
</dbReference>
<dbReference type="GO" id="GO:0048821">
    <property type="term" value="P:erythrocyte development"/>
    <property type="evidence" value="ECO:0007669"/>
    <property type="project" value="Ensembl"/>
</dbReference>
<dbReference type="GO" id="GO:0006783">
    <property type="term" value="P:heme biosynthetic process"/>
    <property type="evidence" value="ECO:0007669"/>
    <property type="project" value="Ensembl"/>
</dbReference>
<dbReference type="GO" id="GO:0006879">
    <property type="term" value="P:intracellular iron ion homeostasis"/>
    <property type="evidence" value="ECO:0000304"/>
    <property type="project" value="Reactome"/>
</dbReference>
<dbReference type="GO" id="GO:0033212">
    <property type="term" value="P:iron import into cell"/>
    <property type="evidence" value="ECO:0000314"/>
    <property type="project" value="UniProtKB"/>
</dbReference>
<dbReference type="GO" id="GO:0034755">
    <property type="term" value="P:iron ion transmembrane transport"/>
    <property type="evidence" value="ECO:0000314"/>
    <property type="project" value="BHF-UCL"/>
</dbReference>
<dbReference type="GO" id="GO:0006826">
    <property type="term" value="P:iron ion transport"/>
    <property type="evidence" value="ECO:0000314"/>
    <property type="project" value="BHF-UCL"/>
</dbReference>
<dbReference type="GO" id="GO:0015692">
    <property type="term" value="P:lead ion transport"/>
    <property type="evidence" value="ECO:0000314"/>
    <property type="project" value="BHF-UCL"/>
</dbReference>
<dbReference type="GO" id="GO:0007611">
    <property type="term" value="P:learning or memory"/>
    <property type="evidence" value="ECO:0007669"/>
    <property type="project" value="Ensembl"/>
</dbReference>
<dbReference type="GO" id="GO:0006828">
    <property type="term" value="P:manganese ion transport"/>
    <property type="evidence" value="ECO:0000314"/>
    <property type="project" value="BHF-UCL"/>
</dbReference>
<dbReference type="GO" id="GO:0060586">
    <property type="term" value="P:multicellular organismal-level iron ion homeostasis"/>
    <property type="evidence" value="ECO:0000315"/>
    <property type="project" value="BHF-UCL"/>
</dbReference>
<dbReference type="GO" id="GO:0015675">
    <property type="term" value="P:nickel cation transport"/>
    <property type="evidence" value="ECO:0000314"/>
    <property type="project" value="UniProtKB"/>
</dbReference>
<dbReference type="GO" id="GO:0001666">
    <property type="term" value="P:response to hypoxia"/>
    <property type="evidence" value="ECO:0000270"/>
    <property type="project" value="UniProtKB"/>
</dbReference>
<dbReference type="GO" id="GO:0010039">
    <property type="term" value="P:response to iron ion"/>
    <property type="evidence" value="ECO:0000270"/>
    <property type="project" value="UniProtKB"/>
</dbReference>
<dbReference type="GO" id="GO:0015676">
    <property type="term" value="P:vanadium ion transport"/>
    <property type="evidence" value="ECO:0000314"/>
    <property type="project" value="UniProtKB"/>
</dbReference>
<dbReference type="HAMAP" id="MF_00221">
    <property type="entry name" value="NRAMP"/>
    <property type="match status" value="1"/>
</dbReference>
<dbReference type="InterPro" id="IPR001046">
    <property type="entry name" value="NRAMP_fam"/>
</dbReference>
<dbReference type="NCBIfam" id="TIGR01197">
    <property type="entry name" value="nramp"/>
    <property type="match status" value="1"/>
</dbReference>
<dbReference type="NCBIfam" id="NF037982">
    <property type="entry name" value="Nramp_1"/>
    <property type="match status" value="1"/>
</dbReference>
<dbReference type="PANTHER" id="PTHR11706:SF40">
    <property type="entry name" value="NATURAL RESISTANCE-ASSOCIATED MACROPHAGE PROTEIN 2"/>
    <property type="match status" value="1"/>
</dbReference>
<dbReference type="PANTHER" id="PTHR11706">
    <property type="entry name" value="SOLUTE CARRIER PROTEIN FAMILY 11 MEMBER"/>
    <property type="match status" value="1"/>
</dbReference>
<dbReference type="Pfam" id="PF01566">
    <property type="entry name" value="Nramp"/>
    <property type="match status" value="1"/>
</dbReference>
<dbReference type="PRINTS" id="PR00447">
    <property type="entry name" value="NATRESASSCMP"/>
</dbReference>
<proteinExistence type="evidence at protein level"/>
<name>NRAM2_HUMAN</name>